<evidence type="ECO:0000250" key="1">
    <source>
        <dbReference type="UniProtKB" id="P42227"/>
    </source>
</evidence>
<evidence type="ECO:0000250" key="2">
    <source>
        <dbReference type="UniProtKB" id="P52631"/>
    </source>
</evidence>
<evidence type="ECO:0000255" key="3">
    <source>
        <dbReference type="PROSITE-ProRule" id="PRU00191"/>
    </source>
</evidence>
<evidence type="ECO:0000269" key="4">
    <source>
    </source>
</evidence>
<evidence type="ECO:0000269" key="5">
    <source>
    </source>
</evidence>
<evidence type="ECO:0000269" key="6">
    <source>
    </source>
</evidence>
<evidence type="ECO:0000269" key="7">
    <source>
    </source>
</evidence>
<evidence type="ECO:0000269" key="8">
    <source>
    </source>
</evidence>
<evidence type="ECO:0000269" key="9">
    <source>
    </source>
</evidence>
<evidence type="ECO:0000269" key="10">
    <source>
    </source>
</evidence>
<evidence type="ECO:0000269" key="11">
    <source>
    </source>
</evidence>
<evidence type="ECO:0000269" key="12">
    <source>
    </source>
</evidence>
<evidence type="ECO:0000269" key="13">
    <source>
    </source>
</evidence>
<evidence type="ECO:0000269" key="14">
    <source>
    </source>
</evidence>
<evidence type="ECO:0000269" key="15">
    <source>
    </source>
</evidence>
<evidence type="ECO:0000269" key="16">
    <source>
    </source>
</evidence>
<evidence type="ECO:0000269" key="17">
    <source>
    </source>
</evidence>
<evidence type="ECO:0000269" key="18">
    <source>
    </source>
</evidence>
<evidence type="ECO:0000269" key="19">
    <source>
    </source>
</evidence>
<evidence type="ECO:0000269" key="20">
    <source>
    </source>
</evidence>
<evidence type="ECO:0000269" key="21">
    <source>
    </source>
</evidence>
<evidence type="ECO:0000269" key="22">
    <source>
    </source>
</evidence>
<evidence type="ECO:0000269" key="23">
    <source>
    </source>
</evidence>
<evidence type="ECO:0000269" key="24">
    <source>
    </source>
</evidence>
<evidence type="ECO:0000269" key="25">
    <source>
    </source>
</evidence>
<evidence type="ECO:0000269" key="26">
    <source>
    </source>
</evidence>
<evidence type="ECO:0000269" key="27">
    <source>
    </source>
</evidence>
<evidence type="ECO:0000269" key="28">
    <source>
    </source>
</evidence>
<evidence type="ECO:0000269" key="29">
    <source>
    </source>
</evidence>
<evidence type="ECO:0000269" key="30">
    <source>
    </source>
</evidence>
<evidence type="ECO:0000269" key="31">
    <source>
    </source>
</evidence>
<evidence type="ECO:0000269" key="32">
    <source>
    </source>
</evidence>
<evidence type="ECO:0000269" key="33">
    <source>
    </source>
</evidence>
<evidence type="ECO:0000269" key="34">
    <source>
    </source>
</evidence>
<evidence type="ECO:0000269" key="35">
    <source>
    </source>
</evidence>
<evidence type="ECO:0000269" key="36">
    <source>
    </source>
</evidence>
<evidence type="ECO:0000269" key="37">
    <source>
    </source>
</evidence>
<evidence type="ECO:0000269" key="38">
    <source>
    </source>
</evidence>
<evidence type="ECO:0000269" key="39">
    <source>
    </source>
</evidence>
<evidence type="ECO:0000269" key="40">
    <source>
    </source>
</evidence>
<evidence type="ECO:0000269" key="41">
    <source>
    </source>
</evidence>
<evidence type="ECO:0000269" key="42">
    <source>
    </source>
</evidence>
<evidence type="ECO:0000269" key="43">
    <source>
    </source>
</evidence>
<evidence type="ECO:0000269" key="44">
    <source>
    </source>
</evidence>
<evidence type="ECO:0000269" key="45">
    <source>
    </source>
</evidence>
<evidence type="ECO:0000269" key="46">
    <source>
    </source>
</evidence>
<evidence type="ECO:0000269" key="47">
    <source>
    </source>
</evidence>
<evidence type="ECO:0000269" key="48">
    <source>
    </source>
</evidence>
<evidence type="ECO:0000269" key="49">
    <source>
    </source>
</evidence>
<evidence type="ECO:0000269" key="50">
    <source>
    </source>
</evidence>
<evidence type="ECO:0000269" key="51">
    <source>
    </source>
</evidence>
<evidence type="ECO:0000269" key="52">
    <source>
    </source>
</evidence>
<evidence type="ECO:0000269" key="53">
    <source>
    </source>
</evidence>
<evidence type="ECO:0000269" key="54">
    <source>
    </source>
</evidence>
<evidence type="ECO:0000269" key="55">
    <source>
    </source>
</evidence>
<evidence type="ECO:0000269" key="56">
    <source>
    </source>
</evidence>
<evidence type="ECO:0000269" key="57">
    <source>
    </source>
</evidence>
<evidence type="ECO:0000269" key="58">
    <source ref="5"/>
</evidence>
<evidence type="ECO:0000303" key="59">
    <source>
    </source>
</evidence>
<evidence type="ECO:0000303" key="60">
    <source>
    </source>
</evidence>
<evidence type="ECO:0000303" key="61">
    <source>
    </source>
</evidence>
<evidence type="ECO:0000303" key="62">
    <source ref="3"/>
</evidence>
<evidence type="ECO:0000305" key="63"/>
<evidence type="ECO:0000305" key="64">
    <source>
    </source>
</evidence>
<evidence type="ECO:0000305" key="65">
    <source>
    </source>
</evidence>
<evidence type="ECO:0000312" key="66">
    <source>
        <dbReference type="HGNC" id="HGNC:11364"/>
    </source>
</evidence>
<evidence type="ECO:0007744" key="67">
    <source>
        <dbReference type="PDB" id="5U5S"/>
    </source>
</evidence>
<evidence type="ECO:0007744" key="68">
    <source>
    </source>
</evidence>
<evidence type="ECO:0007744" key="69">
    <source>
    </source>
</evidence>
<evidence type="ECO:0007744" key="70">
    <source>
    </source>
</evidence>
<evidence type="ECO:0007744" key="71">
    <source>
    </source>
</evidence>
<evidence type="ECO:0007744" key="72">
    <source>
    </source>
</evidence>
<evidence type="ECO:0007744" key="73">
    <source>
    </source>
</evidence>
<evidence type="ECO:0007744" key="74">
    <source>
    </source>
</evidence>
<evidence type="ECO:0007829" key="75">
    <source>
        <dbReference type="PDB" id="6NJS"/>
    </source>
</evidence>
<evidence type="ECO:0007829" key="76">
    <source>
        <dbReference type="PDB" id="6QHD"/>
    </source>
</evidence>
<evidence type="ECO:0007829" key="77">
    <source>
        <dbReference type="PDB" id="6TLC"/>
    </source>
</evidence>
<organism>
    <name type="scientific">Homo sapiens</name>
    <name type="common">Human</name>
    <dbReference type="NCBI Taxonomy" id="9606"/>
    <lineage>
        <taxon>Eukaryota</taxon>
        <taxon>Metazoa</taxon>
        <taxon>Chordata</taxon>
        <taxon>Craniata</taxon>
        <taxon>Vertebrata</taxon>
        <taxon>Euteleostomi</taxon>
        <taxon>Mammalia</taxon>
        <taxon>Eutheria</taxon>
        <taxon>Euarchontoglires</taxon>
        <taxon>Primates</taxon>
        <taxon>Haplorrhini</taxon>
        <taxon>Catarrhini</taxon>
        <taxon>Hominidae</taxon>
        <taxon>Homo</taxon>
    </lineage>
</organism>
<reference key="1">
    <citation type="journal article" date="1994" name="Cell">
        <title>Molecular cloning of APRF, a novel IFN-stimulated gene factor 3 p91-related transcription factor involved in the gp130-mediated signaling pathway.</title>
        <authorList>
            <person name="Akira S."/>
            <person name="Nishio Y."/>
            <person name="Inoue M."/>
            <person name="Wang X.-J."/>
            <person name="Wei S."/>
            <person name="Matsusaka T."/>
            <person name="Yoshida K."/>
            <person name="Sudo T."/>
            <person name="Naruto M."/>
            <person name="Kishimoto T."/>
        </authorList>
    </citation>
    <scope>NUCLEOTIDE SEQUENCE [MRNA] (ISOFORM 1)</scope>
    <scope>VARIANT TYR-561</scope>
    <source>
        <tissue>Placenta</tissue>
    </source>
</reference>
<reference key="2">
    <citation type="journal article" date="1998" name="Gene">
        <title>Highly conserved amino-acid sequence between murine STAT3 and a revised human STAT3 sequence.</title>
        <authorList>
            <person name="Della Pietra L."/>
            <person name="Bressan A."/>
            <person name="Pezzotti A."/>
            <person name="Serlupi-Crescenzi O."/>
        </authorList>
    </citation>
    <scope>NUCLEOTIDE SEQUENCE [MRNA] (ISOFORM 1)</scope>
</reference>
<reference key="3">
    <citation type="patent" date="2012-04-18" number="EP2440214">
        <title>Methods for treating chronic kidney disease.</title>
        <authorList>
            <person name="Feinstein E."/>
            <person name="Adamsky S."/>
            <person name="Erlich S."/>
            <person name="Molitoris B."/>
        </authorList>
    </citation>
    <scope>NUCLEOTIDE SEQUENCE [MRNA] (ISOFORM 3)</scope>
</reference>
<reference key="4">
    <citation type="journal article" date="2004" name="Nat. Genet.">
        <title>Complete sequencing and characterization of 21,243 full-length human cDNAs.</title>
        <authorList>
            <person name="Ota T."/>
            <person name="Suzuki Y."/>
            <person name="Nishikawa T."/>
            <person name="Otsuki T."/>
            <person name="Sugiyama T."/>
            <person name="Irie R."/>
            <person name="Wakamatsu A."/>
            <person name="Hayashi K."/>
            <person name="Sato H."/>
            <person name="Nagai K."/>
            <person name="Kimura K."/>
            <person name="Makita H."/>
            <person name="Sekine M."/>
            <person name="Obayashi M."/>
            <person name="Nishi T."/>
            <person name="Shibahara T."/>
            <person name="Tanaka T."/>
            <person name="Ishii S."/>
            <person name="Yamamoto J."/>
            <person name="Saito K."/>
            <person name="Kawai Y."/>
            <person name="Isono Y."/>
            <person name="Nakamura Y."/>
            <person name="Nagahari K."/>
            <person name="Murakami K."/>
            <person name="Yasuda T."/>
            <person name="Iwayanagi T."/>
            <person name="Wagatsuma M."/>
            <person name="Shiratori A."/>
            <person name="Sudo H."/>
            <person name="Hosoiri T."/>
            <person name="Kaku Y."/>
            <person name="Kodaira H."/>
            <person name="Kondo H."/>
            <person name="Sugawara M."/>
            <person name="Takahashi M."/>
            <person name="Kanda K."/>
            <person name="Yokoi T."/>
            <person name="Furuya T."/>
            <person name="Kikkawa E."/>
            <person name="Omura Y."/>
            <person name="Abe K."/>
            <person name="Kamihara K."/>
            <person name="Katsuta N."/>
            <person name="Sato K."/>
            <person name="Tanikawa M."/>
            <person name="Yamazaki M."/>
            <person name="Ninomiya K."/>
            <person name="Ishibashi T."/>
            <person name="Yamashita H."/>
            <person name="Murakawa K."/>
            <person name="Fujimori K."/>
            <person name="Tanai H."/>
            <person name="Kimata M."/>
            <person name="Watanabe M."/>
            <person name="Hiraoka S."/>
            <person name="Chiba Y."/>
            <person name="Ishida S."/>
            <person name="Ono Y."/>
            <person name="Takiguchi S."/>
            <person name="Watanabe S."/>
            <person name="Yosida M."/>
            <person name="Hotuta T."/>
            <person name="Kusano J."/>
            <person name="Kanehori K."/>
            <person name="Takahashi-Fujii A."/>
            <person name="Hara H."/>
            <person name="Tanase T.-O."/>
            <person name="Nomura Y."/>
            <person name="Togiya S."/>
            <person name="Komai F."/>
            <person name="Hara R."/>
            <person name="Takeuchi K."/>
            <person name="Arita M."/>
            <person name="Imose N."/>
            <person name="Musashino K."/>
            <person name="Yuuki H."/>
            <person name="Oshima A."/>
            <person name="Sasaki N."/>
            <person name="Aotsuka S."/>
            <person name="Yoshikawa Y."/>
            <person name="Matsunawa H."/>
            <person name="Ichihara T."/>
            <person name="Shiohata N."/>
            <person name="Sano S."/>
            <person name="Moriya S."/>
            <person name="Momiyama H."/>
            <person name="Satoh N."/>
            <person name="Takami S."/>
            <person name="Terashima Y."/>
            <person name="Suzuki O."/>
            <person name="Nakagawa S."/>
            <person name="Senoh A."/>
            <person name="Mizoguchi H."/>
            <person name="Goto Y."/>
            <person name="Shimizu F."/>
            <person name="Wakebe H."/>
            <person name="Hishigaki H."/>
            <person name="Watanabe T."/>
            <person name="Sugiyama A."/>
            <person name="Takemoto M."/>
            <person name="Kawakami B."/>
            <person name="Yamazaki M."/>
            <person name="Watanabe K."/>
            <person name="Kumagai A."/>
            <person name="Itakura S."/>
            <person name="Fukuzumi Y."/>
            <person name="Fujimori Y."/>
            <person name="Komiyama M."/>
            <person name="Tashiro H."/>
            <person name="Tanigami A."/>
            <person name="Fujiwara T."/>
            <person name="Ono T."/>
            <person name="Yamada K."/>
            <person name="Fujii Y."/>
            <person name="Ozaki K."/>
            <person name="Hirao M."/>
            <person name="Ohmori Y."/>
            <person name="Kawabata A."/>
            <person name="Hikiji T."/>
            <person name="Kobatake N."/>
            <person name="Inagaki H."/>
            <person name="Ikema Y."/>
            <person name="Okamoto S."/>
            <person name="Okitani R."/>
            <person name="Kawakami T."/>
            <person name="Noguchi S."/>
            <person name="Itoh T."/>
            <person name="Shigeta K."/>
            <person name="Senba T."/>
            <person name="Matsumura K."/>
            <person name="Nakajima Y."/>
            <person name="Mizuno T."/>
            <person name="Morinaga M."/>
            <person name="Sasaki M."/>
            <person name="Togashi T."/>
            <person name="Oyama M."/>
            <person name="Hata H."/>
            <person name="Watanabe M."/>
            <person name="Komatsu T."/>
            <person name="Mizushima-Sugano J."/>
            <person name="Satoh T."/>
            <person name="Shirai Y."/>
            <person name="Takahashi Y."/>
            <person name="Nakagawa K."/>
            <person name="Okumura K."/>
            <person name="Nagase T."/>
            <person name="Nomura N."/>
            <person name="Kikuchi H."/>
            <person name="Masuho Y."/>
            <person name="Yamashita R."/>
            <person name="Nakai K."/>
            <person name="Yada T."/>
            <person name="Nakamura Y."/>
            <person name="Ohara O."/>
            <person name="Isogai T."/>
            <person name="Sugano S."/>
        </authorList>
    </citation>
    <scope>NUCLEOTIDE SEQUENCE [LARGE SCALE MRNA] (ISOFORM 1)</scope>
</reference>
<reference key="5">
    <citation type="submission" date="2004-03" db="EMBL/GenBank/DDBJ databases">
        <authorList>
            <consortium name="SeattleSNPs variation discovery resource"/>
        </authorList>
    </citation>
    <scope>NUCLEOTIDE SEQUENCE [GENOMIC DNA]</scope>
    <scope>VARIANT ILE-143</scope>
</reference>
<reference key="6">
    <citation type="journal article" date="2006" name="Nature">
        <title>DNA sequence of human chromosome 17 and analysis of rearrangement in the human lineage.</title>
        <authorList>
            <person name="Zody M.C."/>
            <person name="Garber M."/>
            <person name="Adams D.J."/>
            <person name="Sharpe T."/>
            <person name="Harrow J."/>
            <person name="Lupski J.R."/>
            <person name="Nicholson C."/>
            <person name="Searle S.M."/>
            <person name="Wilming L."/>
            <person name="Young S.K."/>
            <person name="Abouelleil A."/>
            <person name="Allen N.R."/>
            <person name="Bi W."/>
            <person name="Bloom T."/>
            <person name="Borowsky M.L."/>
            <person name="Bugalter B.E."/>
            <person name="Butler J."/>
            <person name="Chang J.L."/>
            <person name="Chen C.-K."/>
            <person name="Cook A."/>
            <person name="Corum B."/>
            <person name="Cuomo C.A."/>
            <person name="de Jong P.J."/>
            <person name="DeCaprio D."/>
            <person name="Dewar K."/>
            <person name="FitzGerald M."/>
            <person name="Gilbert J."/>
            <person name="Gibson R."/>
            <person name="Gnerre S."/>
            <person name="Goldstein S."/>
            <person name="Grafham D.V."/>
            <person name="Grocock R."/>
            <person name="Hafez N."/>
            <person name="Hagopian D.S."/>
            <person name="Hart E."/>
            <person name="Norman C.H."/>
            <person name="Humphray S."/>
            <person name="Jaffe D.B."/>
            <person name="Jones M."/>
            <person name="Kamal M."/>
            <person name="Khodiyar V.K."/>
            <person name="LaButti K."/>
            <person name="Laird G."/>
            <person name="Lehoczky J."/>
            <person name="Liu X."/>
            <person name="Lokyitsang T."/>
            <person name="Loveland J."/>
            <person name="Lui A."/>
            <person name="Macdonald P."/>
            <person name="Major J.E."/>
            <person name="Matthews L."/>
            <person name="Mauceli E."/>
            <person name="McCarroll S.A."/>
            <person name="Mihalev A.H."/>
            <person name="Mudge J."/>
            <person name="Nguyen C."/>
            <person name="Nicol R."/>
            <person name="O'Leary S.B."/>
            <person name="Osoegawa K."/>
            <person name="Schwartz D.C."/>
            <person name="Shaw-Smith C."/>
            <person name="Stankiewicz P."/>
            <person name="Steward C."/>
            <person name="Swarbreck D."/>
            <person name="Venkataraman V."/>
            <person name="Whittaker C.A."/>
            <person name="Yang X."/>
            <person name="Zimmer A.R."/>
            <person name="Bradley A."/>
            <person name="Hubbard T."/>
            <person name="Birren B.W."/>
            <person name="Rogers J."/>
            <person name="Lander E.S."/>
            <person name="Nusbaum C."/>
        </authorList>
    </citation>
    <scope>NUCLEOTIDE SEQUENCE [LARGE SCALE GENOMIC DNA]</scope>
</reference>
<reference key="7">
    <citation type="submission" date="2005-07" db="EMBL/GenBank/DDBJ databases">
        <authorList>
            <person name="Mural R.J."/>
            <person name="Istrail S."/>
            <person name="Sutton G.G."/>
            <person name="Florea L."/>
            <person name="Halpern A.L."/>
            <person name="Mobarry C.M."/>
            <person name="Lippert R."/>
            <person name="Walenz B."/>
            <person name="Shatkay H."/>
            <person name="Dew I."/>
            <person name="Miller J.R."/>
            <person name="Flanigan M.J."/>
            <person name="Edwards N.J."/>
            <person name="Bolanos R."/>
            <person name="Fasulo D."/>
            <person name="Halldorsson B.V."/>
            <person name="Hannenhalli S."/>
            <person name="Turner R."/>
            <person name="Yooseph S."/>
            <person name="Lu F."/>
            <person name="Nusskern D.R."/>
            <person name="Shue B.C."/>
            <person name="Zheng X.H."/>
            <person name="Zhong F."/>
            <person name="Delcher A.L."/>
            <person name="Huson D.H."/>
            <person name="Kravitz S.A."/>
            <person name="Mouchard L."/>
            <person name="Reinert K."/>
            <person name="Remington K.A."/>
            <person name="Clark A.G."/>
            <person name="Waterman M.S."/>
            <person name="Eichler E.E."/>
            <person name="Adams M.D."/>
            <person name="Hunkapiller M.W."/>
            <person name="Myers E.W."/>
            <person name="Venter J.C."/>
        </authorList>
    </citation>
    <scope>NUCLEOTIDE SEQUENCE [LARGE SCALE GENOMIC DNA]</scope>
</reference>
<reference key="8">
    <citation type="journal article" date="2004" name="Genome Res.">
        <title>The status, quality, and expansion of the NIH full-length cDNA project: the Mammalian Gene Collection (MGC).</title>
        <authorList>
            <consortium name="The MGC Project Team"/>
        </authorList>
    </citation>
    <scope>NUCLEOTIDE SEQUENCE [LARGE SCALE MRNA] (ISOFORMS 1 AND DEL-701)</scope>
    <source>
        <tissue>Kidney</tissue>
        <tissue>Pancreas</tissue>
    </source>
</reference>
<reference key="9">
    <citation type="submission" date="1997-10" db="EMBL/GenBank/DDBJ databases">
        <authorList>
            <person name="Della Pietra L."/>
            <person name="Bressan A."/>
            <person name="Pezzotti A.R."/>
            <person name="Serlupi-Crescenzi O."/>
        </authorList>
    </citation>
    <scope>NUCLEOTIDE SEQUENCE [MRNA] OF 564-704</scope>
    <source>
        <tissue>Liver</tissue>
    </source>
</reference>
<reference key="10">
    <citation type="journal article" date="1995" name="Science">
        <title>Requirement of serine phosphorylation for formation of STAT-promoter complexes.</title>
        <authorList>
            <person name="Zhang X."/>
            <person name="Blenis J."/>
            <person name="Li H.-C."/>
            <person name="Schindler C."/>
            <person name="Chen-Kiang S."/>
        </authorList>
    </citation>
    <scope>PHOSPHORYLATION AT SERINE RESIDUES</scope>
</reference>
<reference key="11">
    <citation type="journal article" date="1997" name="Science">
        <title>Specific inhibition of Stat3 signal transduction by PIAS3.</title>
        <authorList>
            <person name="Chung C.D."/>
            <person name="Liao J."/>
            <person name="Liu B."/>
            <person name="Rao X."/>
            <person name="Jay P."/>
            <person name="Berta P."/>
            <person name="Shuai K."/>
        </authorList>
    </citation>
    <scope>INTERACTION WITH PIAS3</scope>
</reference>
<reference key="12">
    <citation type="journal article" date="2000" name="Mol. Cell. Biol.">
        <title>Etk, a Btk family tyrosine kinase, mediates cellular transformation by linking Src to STAT3 activation.</title>
        <authorList>
            <person name="Tsai Y.T."/>
            <person name="Su Y.H."/>
            <person name="Fang S.S."/>
            <person name="Huang T.N."/>
            <person name="Qiu Y."/>
            <person name="Jou Y.S."/>
            <person name="Shih H.M."/>
            <person name="Kung H.J."/>
            <person name="Chen R.H."/>
        </authorList>
    </citation>
    <scope>PHOSPHORYLATION BY BMX</scope>
    <scope>INTERACTION WITH BMX</scope>
    <scope>FUNCTION</scope>
</reference>
<reference key="13">
    <citation type="journal article" date="2002" name="Biochem. Biophys. Res. Commun.">
        <title>The nuclear isoform of protein-tyrosine phosphatase TC-PTP regulates interleukin-6-mediated signaling pathway through STAT3 dephosphorylation.</title>
        <authorList>
            <person name="Yamamoto T."/>
            <person name="Sekine Y."/>
            <person name="Kashima K."/>
            <person name="Kubota A."/>
            <person name="Sato N."/>
            <person name="Aoki N."/>
            <person name="Matsuda T."/>
        </authorList>
    </citation>
    <scope>FUNCTION IN IL6 SIGNALING</scope>
    <scope>PHOSPHORYLATION</scope>
    <scope>DEPHOSPHORYLATION BY PTPN2</scope>
</reference>
<reference key="14">
    <citation type="journal article" date="2002" name="J. Biol. Chem.">
        <title>Functional interaction of STAT3 transcription factor with the coactivator NcoA/SRC1a.</title>
        <authorList>
            <person name="Giraud S."/>
            <person name="Bienvenu F."/>
            <person name="Avril S."/>
            <person name="Gascan H."/>
            <person name="Heery D.M."/>
            <person name="Coqueret O."/>
        </authorList>
    </citation>
    <scope>INTERACTION WITH NCOA1</scope>
</reference>
<reference key="15">
    <citation type="journal article" date="2002" name="J. Exp. Med.">
        <title>Activation of STAT3 by the hepatitis C virus core protein leads to cellular transformation.</title>
        <authorList>
            <person name="Yoshida T."/>
            <person name="Hanada T."/>
            <person name="Tokuhisa T."/>
            <person name="Kosai K."/>
            <person name="Sata M."/>
            <person name="Kohara M."/>
            <person name="Yoshimura A."/>
        </authorList>
    </citation>
    <scope>INTERACTION WITH HCV CORE PROTEIN</scope>
</reference>
<reference key="16">
    <citation type="journal article" date="2002" name="J. Immunol.">
        <title>A receptor for the heterodimeric cytokine IL-23 is composed of IL-12Rbeta1 and a novel cytokine receptor subunit, IL-23R.</title>
        <authorList>
            <person name="Parham C."/>
            <person name="Chirica M."/>
            <person name="Timans J."/>
            <person name="Vaisberg E."/>
            <person name="Travis M."/>
            <person name="Cheung J."/>
            <person name="Pflanz S."/>
            <person name="Zhang R."/>
            <person name="Singh K.P."/>
            <person name="Vega F."/>
            <person name="To W."/>
            <person name="Wagner J."/>
            <person name="O'Farrell A.-M."/>
            <person name="McClanahan T.K."/>
            <person name="Zurawski S."/>
            <person name="Hannum C."/>
            <person name="Gorman D."/>
            <person name="Rennick D.M."/>
            <person name="Kastelein R.A."/>
            <person name="de Waal Malefyt R."/>
            <person name="Moore K.W."/>
        </authorList>
    </citation>
    <scope>INTERACTION WITH IL23R</scope>
</reference>
<reference key="17">
    <citation type="journal article" date="2003" name="Cancer Res.">
        <title>Identification and characterization of signal transducer and activator of transcription 3 recruitment sites within the epidermal growth factor receptor.</title>
        <authorList>
            <person name="Shao H."/>
            <person name="Cheng H.Y."/>
            <person name="Cook R.G."/>
            <person name="Tweardy D.J."/>
        </authorList>
    </citation>
    <scope>FUNCTION IN EGFR SIGNALING</scope>
    <scope>INTERACTION WITH EGFR</scope>
</reference>
<reference key="18">
    <citation type="journal article" date="2003" name="Exp. Hematol.">
        <title>Erythropoietin-induced serine 727 phosphorylation of STAT3 in erythroid cells is mediated by a MEK-, ERK-, and MSK1-dependent pathway.</title>
        <authorList>
            <person name="Wierenga A.T."/>
            <person name="Vogelzang I."/>
            <person name="Eggen B.J."/>
            <person name="Vellenga E."/>
        </authorList>
    </citation>
    <scope>PHOSPHORYLATION AT TYR-705 AND SER-727</scope>
</reference>
<reference key="19">
    <citation type="journal article" date="2004" name="J. Biol. Chem.">
        <title>Characterization of the signaling capacities of the novel gp130-like cytokine receptor.</title>
        <authorList>
            <person name="Dreuw A."/>
            <person name="Radtke S."/>
            <person name="Pflanz S."/>
            <person name="Lippok B.E."/>
            <person name="Heinrich P.C."/>
            <person name="Hermanns H.M."/>
        </authorList>
    </citation>
    <scope>FUNCTION</scope>
    <scope>INTERACTION WITH IL31RA</scope>
</reference>
<reference key="20">
    <citation type="journal article" date="2004" name="J. Biol. Chem.">
        <title>IRAK1 serves as a novel regulator essential for lipopolysaccharide-induced interleukin-10 gene expression.</title>
        <authorList>
            <person name="Huang Y."/>
            <person name="Li T."/>
            <person name="Sane D.C."/>
            <person name="Li L."/>
        </authorList>
    </citation>
    <scope>PHOSPHORYLATION AT SER-727 BY IRAK1</scope>
</reference>
<reference key="21">
    <citation type="journal article" date="2004" name="Oncogene">
        <title>TMF/ARA160 is a BC-box-containing protein that mediates the degradation of Stat3.</title>
        <authorList>
            <person name="Perry E."/>
            <person name="Tsruya R."/>
            <person name="Levitsky P."/>
            <person name="Pomp O."/>
            <person name="Taller M."/>
            <person name="Weisberg S."/>
            <person name="Parris W."/>
            <person name="Kulkarni S."/>
            <person name="Malovani H."/>
            <person name="Pawson T."/>
            <person name="Shpungin S."/>
            <person name="Nir U."/>
        </authorList>
    </citation>
    <scope>INTERACTION WITH TMF1</scope>
</reference>
<reference key="22">
    <citation type="journal article" date="2005" name="Cancer Res.">
        <title>Proline-, glutamic acid-, and leucine-rich protein-1 is essential in growth factor regulation of signal transducers and activators of transcription 3 activation.</title>
        <authorList>
            <person name="Manavathi B."/>
            <person name="Nair S.S."/>
            <person name="Wang R.-A."/>
            <person name="Kumar R."/>
            <person name="Vadlamudi R.K."/>
        </authorList>
    </citation>
    <scope>INTERACTION WITH PELP1</scope>
</reference>
<reference key="23">
    <citation type="journal article" date="2005" name="Gastroenterology">
        <title>STAT3 NH2-terminal acetylation is activated by the hepatic acute-phase response and required for IL-6 induction of angiotensinogen.</title>
        <authorList>
            <person name="Ray S."/>
            <person name="Boldogh I."/>
            <person name="Brasier A.R."/>
        </authorList>
    </citation>
    <scope>FUNCTION</scope>
    <scope>SUBCELLULAR LOCATION</scope>
    <scope>ACETYLATION AT LYS-49 AND LYS-87</scope>
    <scope>MUTAGENESIS OF LYS-49 AND LYS-87</scope>
</reference>
<reference key="24">
    <citation type="journal article" date="2005" name="Int. Immunol.">
        <title>Physical and functional interactions between STAT3 and ZIP kinase.</title>
        <authorList>
            <person name="Sato N."/>
            <person name="Kawai T."/>
            <person name="Sugiyama K."/>
            <person name="Muromoto R."/>
            <person name="Imoto S."/>
            <person name="Sekine Y."/>
            <person name="Ishida M."/>
            <person name="Akira S."/>
            <person name="Matsuda T."/>
        </authorList>
    </citation>
    <scope>PHOSPHORYLATION AT SER-727 BY ZIPK/DAPK3</scope>
    <scope>INTERACTION WITH ZIPK/DAPK3</scope>
    <scope>SUBCELLULAR LOCATION</scope>
</reference>
<reference key="25">
    <citation type="journal article" date="2005" name="J. Biol. Chem.">
        <title>Suppressor of cytokine signaling 7 inhibits prolactin, growth hormone, and leptin signaling by interacting with STAT5 or STAT3 and attenuating their nuclear translocation.</title>
        <authorList>
            <person name="Martens N."/>
            <person name="Uzan G."/>
            <person name="Wery M."/>
            <person name="Hooghe R."/>
            <person name="Hooghe-Peters E.L."/>
            <person name="Gertler A."/>
        </authorList>
    </citation>
    <scope>INTERACTION WITH SOCS7</scope>
</reference>
<reference key="26">
    <citation type="journal article" date="2005" name="Nat. Biotechnol.">
        <title>Immunoaffinity profiling of tyrosine phosphorylation in cancer cells.</title>
        <authorList>
            <person name="Rush J."/>
            <person name="Moritz A."/>
            <person name="Lee K.A."/>
            <person name="Guo A."/>
            <person name="Goss V.L."/>
            <person name="Spek E.J."/>
            <person name="Zhang H."/>
            <person name="Zha X.-M."/>
            <person name="Polakiewicz R.D."/>
            <person name="Comb M.J."/>
        </authorList>
    </citation>
    <scope>PHOSPHORYLATION [LARGE SCALE ANALYSIS] AT TYR-705</scope>
    <scope>PHOSPHORYLATION [LARGE SCALE ANALYSIS] AT TYR-704 (ISOFORM DEL-701)</scope>
    <scope>IDENTIFICATION BY MASS SPECTROMETRY [LARGE SCALE ANALYSIS]</scope>
</reference>
<reference key="27">
    <citation type="journal article" date="2005" name="Proc. Natl. Acad. Sci. U.S.A.">
        <title>STAT3 nuclear import is independent of tyrosine phosphorylation and mediated by importin-alpha3.</title>
        <authorList>
            <person name="Liu L."/>
            <person name="McBride K.M."/>
            <person name="Reich N.C."/>
        </authorList>
    </citation>
    <scope>SUBCELLULAR LOCATION</scope>
    <scope>NUCLEAR IMPORT MOTIF</scope>
</reference>
<reference key="28">
    <citation type="journal article" date="2005" name="Science">
        <title>Stat3 dimerization regulated by reversible acetylation of a single lysine residue.</title>
        <authorList>
            <person name="Yuan Z.L."/>
            <person name="Guan Y.J."/>
            <person name="Chatterjee D."/>
            <person name="Chin Y.E."/>
        </authorList>
    </citation>
    <scope>FUNCTION</scope>
    <scope>SUBUNIT</scope>
    <scope>SUBCELLULAR LOCATION</scope>
    <scope>ACETYLATION AT LYS-685</scope>
    <scope>MUTAGENESIS OF LYS-685</scope>
</reference>
<reference key="29">
    <citation type="journal article" date="2006" name="Oncogene">
        <title>Identification of STAT3 as a specific substrate of breast tumor kinase.</title>
        <authorList>
            <person name="Liu L."/>
            <person name="Gao Y."/>
            <person name="Qiu H."/>
            <person name="Miller W.T."/>
            <person name="Poli V."/>
            <person name="Reich N.C."/>
        </authorList>
    </citation>
    <scope>PHOSPHORYLATION AT TYR-705 BY PTK6</scope>
</reference>
<reference key="30">
    <citation type="journal article" date="2007" name="Cancer Res.">
        <title>Protein kinase Cepsilon interacts with signal transducers and activators of transcription 3 (Stat3), phosphorylates Stat3Ser727, and regulates its constitutive activation in prostate cancer.</title>
        <authorList>
            <person name="Aziz M.H."/>
            <person name="Manoharan H.T."/>
            <person name="Church D.R."/>
            <person name="Dreckschmidt N.E."/>
            <person name="Zhong W."/>
            <person name="Oberley T.D."/>
            <person name="Wilding G."/>
            <person name="Verma A.K."/>
        </authorList>
    </citation>
    <scope>INTERACTION WITH PRKCE</scope>
    <scope>PHOSPHORYLATION AT SER-727</scope>
</reference>
<reference key="31">
    <citation type="journal article" date="2007" name="J. Biol. Chem.">
        <title>leptin-induced growth stimulation of breast cancer cells involves recruitment of histone acetyltransferases and mediator complex to CYCLIN D1 promoter via activation of Stat3.</title>
        <authorList>
            <person name="Saxena N.K."/>
            <person name="Vertino P.M."/>
            <person name="Anania F.A."/>
            <person name="Sharma D."/>
        </authorList>
    </citation>
    <scope>FUNCTION</scope>
    <scope>PHOSPHORYLATION</scope>
    <scope>MUTAGENESIS OF 434-GLU-GLU-435 AND TYR-705</scope>
</reference>
<reference key="32">
    <citation type="journal article" date="2007" name="J. Biol. Chem.">
        <title>The functional role of an interleukin 6-inducible CDK9.STAT3 complex in human gamma-fibrinogen gene expression.</title>
        <authorList>
            <person name="Hou T."/>
            <person name="Ray S."/>
            <person name="Brasier A.R."/>
        </authorList>
    </citation>
    <scope>INTERACTION WITH CDK9</scope>
</reference>
<reference key="33">
    <citation type="journal article" date="2008" name="Biochem. Biophys. Res. Commun.">
        <title>up-regulation of survivin by leptin/STAT3 signaling in MCF-7 cells.</title>
        <authorList>
            <person name="Jiang H."/>
            <person name="Yu J."/>
            <person name="Guo H."/>
            <person name="Song H."/>
            <person name="Chen S."/>
        </authorList>
    </citation>
    <scope>FUNCTION</scope>
</reference>
<reference key="34">
    <citation type="journal article" date="2008" name="Biochem. Pharmacol.">
        <title>Role for DYRK family kinases on regulation of apoptosis.</title>
        <authorList>
            <person name="Yoshida K."/>
        </authorList>
    </citation>
    <scope>PHOSPHORYLATION AT SER-727 BY DYRK2</scope>
</reference>
<reference key="35">
    <citation type="journal article" date="2008" name="Blood">
        <title>Oncogenic association of the Cbp/PAG adaptor protein with the Lyn tyrosine kinase in human B-NHL rafts.</title>
        <authorList>
            <person name="Tauzin S."/>
            <person name="Ding H."/>
            <person name="Khatib K."/>
            <person name="Ahmad I."/>
            <person name="Burdevet D."/>
            <person name="van Echten-Deckert G."/>
            <person name="Lindquist J.A."/>
            <person name="Schraven B."/>
            <person name="Din N.U."/>
            <person name="Borisch B."/>
            <person name="Hoessli D.C."/>
        </authorList>
    </citation>
    <scope>IDENTIFICATION IN A COMPLEX WITH LYN AND PAG1</scope>
</reference>
<reference key="36">
    <citation type="journal article" date="2008" name="Int. Immunol.">
        <title>BART is essential for nuclear retention of STAT3.</title>
        <authorList>
            <person name="Muromoto R."/>
            <person name="Sekine Y."/>
            <person name="Imoto S."/>
            <person name="Ikeda O."/>
            <person name="Okayama T."/>
            <person name="Sato N."/>
            <person name="Matsuda T."/>
        </authorList>
    </citation>
    <scope>INTERACTION WITH ARL2BP</scope>
    <scope>PHOSPHORYLATION AT SERINE RESIDUES</scope>
    <scope>SUBCELLULAR LOCATION</scope>
</reference>
<reference key="37">
    <citation type="journal article" date="2008" name="J. Biol. Chem.">
        <title>The STAT3 NH2-terminal domain stabilizes enhanceosome assembly by interacting with the p300 bromodomain.</title>
        <authorList>
            <person name="Hou T."/>
            <person name="Ray S."/>
            <person name="Lee C."/>
            <person name="Brasier A.R."/>
        </authorList>
    </citation>
    <scope>FUNCTION</scope>
    <scope>INTERACTION WITH EP300</scope>
    <scope>ACETYLATION AT LYS-49 AND LYS-87</scope>
    <scope>MUTAGENESIS OF LYS-49 AND LYS-87</scope>
</reference>
<reference key="38">
    <citation type="journal article" date="2008" name="Mol. Cell">
        <title>Kinase-selective enrichment enables quantitative phosphoproteomics of the kinome across the cell cycle.</title>
        <authorList>
            <person name="Daub H."/>
            <person name="Olsen J.V."/>
            <person name="Bairlein M."/>
            <person name="Gnad F."/>
            <person name="Oppermann F.S."/>
            <person name="Korner R."/>
            <person name="Greff Z."/>
            <person name="Keri G."/>
            <person name="Stemmann O."/>
            <person name="Mann M."/>
        </authorList>
    </citation>
    <scope>PHOSPHORYLATION [LARGE SCALE ANALYSIS] AT SER-727</scope>
    <scope>IDENTIFICATION BY MASS SPECTROMETRY [LARGE SCALE ANALYSIS]</scope>
    <source>
        <tissue>Cervix carcinoma</tissue>
    </source>
</reference>
<reference key="39">
    <citation type="journal article" date="2008" name="Proc. Natl. Acad. Sci. U.S.A.">
        <title>A quantitative atlas of mitotic phosphorylation.</title>
        <authorList>
            <person name="Dephoure N."/>
            <person name="Zhou C."/>
            <person name="Villen J."/>
            <person name="Beausoleil S.A."/>
            <person name="Bakalarski C.E."/>
            <person name="Elledge S.J."/>
            <person name="Gygi S.P."/>
        </authorList>
    </citation>
    <scope>PHOSPHORYLATION [LARGE SCALE ANALYSIS] AT SER-727</scope>
    <scope>IDENTIFICATION BY MASS SPECTROMETRY [LARGE SCALE ANALYSIS]</scope>
    <source>
        <tissue>Cervix carcinoma</tissue>
    </source>
</reference>
<reference key="40">
    <citation type="journal article" date="2009" name="Anal. Chem.">
        <title>Lys-N and trypsin cover complementary parts of the phosphoproteome in a refined SCX-based approach.</title>
        <authorList>
            <person name="Gauci S."/>
            <person name="Helbig A.O."/>
            <person name="Slijper M."/>
            <person name="Krijgsveld J."/>
            <person name="Heck A.J."/>
            <person name="Mohammed S."/>
        </authorList>
    </citation>
    <scope>IDENTIFICATION BY MASS SPECTROMETRY [LARGE SCALE ANALYSIS]</scope>
</reference>
<reference key="41">
    <citation type="journal article" date="2009" name="Mol. Cancer Res.">
        <title>The Fer tyrosine kinase cooperates with interleukin-6 to activate signal transducer and activator of transcription 3 and promote human prostate cancer cell growth.</title>
        <authorList>
            <person name="Zoubeidi A."/>
            <person name="Rocha J."/>
            <person name="Zouanat F.Z."/>
            <person name="Hamel L."/>
            <person name="Scarlata E."/>
            <person name="Aprikian A.G."/>
            <person name="Chevalier S."/>
        </authorList>
    </citation>
    <scope>INTERACTION WITH FER</scope>
    <scope>PHOSPHORYLATION BY FER</scope>
</reference>
<reference key="42">
    <citation type="journal article" date="2010" name="J. Biol. Chem.">
        <title>Acetylation directs survivin nuclear localization to repress STAT3 oncogenic activity.</title>
        <authorList>
            <person name="Wang H."/>
            <person name="Holloway M.P."/>
            <person name="Ma L."/>
            <person name="Cooper Z.A."/>
            <person name="Riolo M."/>
            <person name="Samkari A."/>
            <person name="Elenitoba-Johnson K.S."/>
            <person name="Chin Y.E."/>
            <person name="Altura R.A."/>
        </authorList>
    </citation>
    <scope>INTERACTION WITH BIRC5/SURVIVIN</scope>
</reference>
<reference key="43">
    <citation type="journal article" date="2010" name="Sci. Signal.">
        <title>Quantitative phosphoproteomics reveals widespread full phosphorylation site occupancy during mitosis.</title>
        <authorList>
            <person name="Olsen J.V."/>
            <person name="Vermeulen M."/>
            <person name="Santamaria A."/>
            <person name="Kumar C."/>
            <person name="Miller M.L."/>
            <person name="Jensen L.J."/>
            <person name="Gnad F."/>
            <person name="Cox J."/>
            <person name="Jensen T.S."/>
            <person name="Nigg E.A."/>
            <person name="Brunak S."/>
            <person name="Mann M."/>
        </authorList>
    </citation>
    <scope>PHOSPHORYLATION [LARGE SCALE ANALYSIS] AT SER-727</scope>
    <scope>IDENTIFICATION BY MASS SPECTROMETRY [LARGE SCALE ANALYSIS]</scope>
    <source>
        <tissue>Cervix carcinoma</tissue>
    </source>
</reference>
<reference key="44">
    <citation type="journal article" date="2011" name="BMC Syst. Biol.">
        <title>Initial characterization of the human central proteome.</title>
        <authorList>
            <person name="Burkard T.R."/>
            <person name="Planyavsky M."/>
            <person name="Kaupe I."/>
            <person name="Breitwieser F.P."/>
            <person name="Buerckstuemmer T."/>
            <person name="Bennett K.L."/>
            <person name="Superti-Furga G."/>
            <person name="Colinge J."/>
        </authorList>
    </citation>
    <scope>IDENTIFICATION BY MASS SPECTROMETRY [LARGE SCALE ANALYSIS]</scope>
</reference>
<reference key="45">
    <citation type="journal article" date="2011" name="J. Biol. Chem.">
        <title>Mechanisms of STAT protein activation by oncogenic KIT mutants in neoplastic mast cells.</title>
        <authorList>
            <person name="Chaix A."/>
            <person name="Lopez S."/>
            <person name="Voisset E."/>
            <person name="Gros L."/>
            <person name="Dubreuil P."/>
            <person name="De Sepulveda P."/>
        </authorList>
    </citation>
    <scope>PHOSPHORYLATION AT TYR-705 IN RESPONSE TO KIT SIGNALING</scope>
    <scope>PHOSPHORYLATION AT SER-727</scope>
</reference>
<reference key="46">
    <citation type="journal article" date="2012" name="Mol. Cell">
        <title>Pyruvate kinase M2 regulates gene transcription by acting as a protein kinase.</title>
        <authorList>
            <person name="Gao X."/>
            <person name="Wang H."/>
            <person name="Yang J.J."/>
            <person name="Liu X."/>
            <person name="Liu Z.R."/>
        </authorList>
    </citation>
    <scope>FUNCTION</scope>
    <scope>PHOSPHORYLATION AT TYR-705</scope>
</reference>
<reference key="47">
    <citation type="journal article" date="2012" name="Mol. Cell">
        <title>Cytoplasmic STAT3 represses autophagy by inhibiting PKR activity.</title>
        <authorList>
            <person name="Shen S."/>
            <person name="Niso-Santano M."/>
            <person name="Adjemian S."/>
            <person name="Takehara T."/>
            <person name="Malik S.A."/>
            <person name="Minoux H."/>
            <person name="Souquere S."/>
            <person name="Marino G."/>
            <person name="Lachkar S."/>
            <person name="Senovilla L."/>
            <person name="Galluzzi L."/>
            <person name="Kepp O."/>
            <person name="Pierron G."/>
            <person name="Maiuri M.C."/>
            <person name="Hikita H."/>
            <person name="Kroemer R."/>
            <person name="Kroemer G."/>
        </authorList>
    </citation>
    <scope>FUNCTION</scope>
    <scope>INTERACTION WITH EIF2AK2</scope>
</reference>
<reference key="48">
    <citation type="journal article" date="2012" name="Mol. Cell. Proteomics">
        <title>Comparative large-scale characterisation of plant vs. mammal proteins reveals similar and idiosyncratic N-alpha acetylation features.</title>
        <authorList>
            <person name="Bienvenut W.V."/>
            <person name="Sumpton D."/>
            <person name="Martinez A."/>
            <person name="Lilla S."/>
            <person name="Espagne C."/>
            <person name="Meinnel T."/>
            <person name="Giglione C."/>
        </authorList>
    </citation>
    <scope>ACETYLATION [LARGE SCALE ANALYSIS] AT ALA-2</scope>
    <scope>CLEAVAGE OF INITIATOR METHIONINE [LARGE SCALE ANALYSIS]</scope>
    <scope>IDENTIFICATION BY MASS SPECTROMETRY [LARGE SCALE ANALYSIS]</scope>
</reference>
<reference key="49">
    <citation type="journal article" date="2012" name="Proc. Natl. Acad. Sci. U.S.A.">
        <title>N-terminal acetylome analyses and functional insights of the N-terminal acetyltransferase NatB.</title>
        <authorList>
            <person name="Van Damme P."/>
            <person name="Lasa M."/>
            <person name="Polevoda B."/>
            <person name="Gazquez C."/>
            <person name="Elosegui-Artola A."/>
            <person name="Kim D.S."/>
            <person name="De Juan-Pardo E."/>
            <person name="Demeyer K."/>
            <person name="Hole K."/>
            <person name="Larrea E."/>
            <person name="Timmerman E."/>
            <person name="Prieto J."/>
            <person name="Arnesen T."/>
            <person name="Sherman F."/>
            <person name="Gevaert K."/>
            <person name="Aldabe R."/>
        </authorList>
    </citation>
    <scope>IDENTIFICATION BY MASS SPECTROMETRY [LARGE SCALE ANALYSIS]</scope>
</reference>
<reference key="50">
    <citation type="journal article" date="2013" name="J. Proteome Res.">
        <title>Toward a comprehensive characterization of a human cancer cell phosphoproteome.</title>
        <authorList>
            <person name="Zhou H."/>
            <person name="Di Palma S."/>
            <person name="Preisinger C."/>
            <person name="Peng M."/>
            <person name="Polat A.N."/>
            <person name="Heck A.J."/>
            <person name="Mohammed S."/>
        </authorList>
    </citation>
    <scope>PHOSPHORYLATION [LARGE SCALE ANALYSIS] AT SER-727</scope>
    <scope>IDENTIFICATION BY MASS SPECTROMETRY [LARGE SCALE ANALYSIS]</scope>
    <source>
        <tissue>Erythroleukemia</tissue>
    </source>
</reference>
<reference key="51">
    <citation type="journal article" date="2014" name="J. Proteomics">
        <title>An enzyme assisted RP-RPLC approach for in-depth analysis of human liver phosphoproteome.</title>
        <authorList>
            <person name="Bian Y."/>
            <person name="Song C."/>
            <person name="Cheng K."/>
            <person name="Dong M."/>
            <person name="Wang F."/>
            <person name="Huang J."/>
            <person name="Sun D."/>
            <person name="Wang L."/>
            <person name="Ye M."/>
            <person name="Zou H."/>
        </authorList>
    </citation>
    <scope>PHOSPHORYLATION [LARGE SCALE ANALYSIS] AT TYR-705; THR-714 AND SER-727</scope>
    <scope>PHOSPHORYLATION [LARGE SCALE ANALYSIS] AT TYR-704 (ISOFORM DEL-701)</scope>
    <scope>IDENTIFICATION BY MASS SPECTROMETRY [LARGE SCALE ANALYSIS]</scope>
    <source>
        <tissue>Liver</tissue>
    </source>
</reference>
<reference key="52">
    <citation type="journal article" date="2014" name="Sci. Rep.">
        <title>Inositol Polyphosphate-5-Phosphatase F (INPP5F) inhibits STAT3 activity and suppresses gliomas tumorigenicity.</title>
        <authorList>
            <person name="Kim H.S."/>
            <person name="Li A."/>
            <person name="Ahn S."/>
            <person name="Song H."/>
            <person name="Zhang W."/>
        </authorList>
    </citation>
    <scope>INTERACTION WITH INPP5F</scope>
    <scope>MUTAGENESIS OF TYR-705</scope>
</reference>
<reference key="53">
    <citation type="journal article" date="2015" name="Nature">
        <title>Germline variant FGFR4 p.G388R exposes a membrane-proximal STAT3 binding site.</title>
        <authorList>
            <person name="Ulaganathan V.K."/>
            <person name="Sperl B."/>
            <person name="Rapp U.R."/>
            <person name="Ullrich A."/>
        </authorList>
    </citation>
    <scope>INTERACTION WITH FGFR4</scope>
</reference>
<reference key="54">
    <citation type="journal article" date="2016" name="PLoS Pathog.">
        <title>Human Cytomegalovirus Immediate-Early 1 Protein Rewires Upstream STAT3 to Downstream STAT1 Signaling Switching an IL6-Type to an IFNgamma-Like Response.</title>
        <authorList>
            <person name="Harwardt T."/>
            <person name="Lukas S."/>
            <person name="Zenger M."/>
            <person name="Reitberger T."/>
            <person name="Danzer D."/>
            <person name="Uebner T."/>
            <person name="Munday D.C."/>
            <person name="Nevels M."/>
            <person name="Paulus C."/>
        </authorList>
    </citation>
    <scope>INTERACTION WITH HHV-5 IMMEDIATE EARLY PROTEIN IE1 (MICROBIAL INFECTION)</scope>
</reference>
<reference key="55">
    <citation type="journal article" date="2017" name="Mol. Cell">
        <title>Lysyl oxidase 3 is a dual-specificity enzyme involved in STAT3 deacetylation and deacetylimination modulation.</title>
        <authorList>
            <person name="Ma L."/>
            <person name="Huang C."/>
            <person name="Wang X.J."/>
            <person name="Xin D.E."/>
            <person name="Wang L.S."/>
            <person name="Zou Q.C."/>
            <person name="Zhang Y.S."/>
            <person name="Tan M.D."/>
            <person name="Wang Y.M."/>
            <person name="Zhao T.C."/>
            <person name="Chatterjee D."/>
            <person name="Altura R.A."/>
            <person name="Wang C."/>
            <person name="Xu Y.S."/>
            <person name="Yang J.H."/>
            <person name="Fan Y.S."/>
            <person name="Han B.H."/>
            <person name="Si J."/>
            <person name="Zhang X."/>
            <person name="Cheng J."/>
            <person name="Chang Z."/>
            <person name="Chin Y.E."/>
        </authorList>
    </citation>
    <scope>FUNCTION</scope>
    <scope>SUBCELLULAR LOCATION</scope>
    <scope>SUBUNIT</scope>
    <scope>ALLYSINE AT LYS-601; LYS-615; LYS-631 AND LYS-685</scope>
    <scope>ACETYLATION AT LYS-601; LYS-615; LYS-631; LYS-685 AND LYS-707</scope>
</reference>
<reference key="56">
    <citation type="journal article" date="2017" name="Sci. Rep.">
        <title>TYK2-induced phosphorylation of Y640 suppresses STAT3 transcriptional activity.</title>
        <authorList>
            <person name="Mori R."/>
            <person name="Wauman J."/>
            <person name="Icardi L."/>
            <person name="Van der Heyden J."/>
            <person name="De Cauwer L."/>
            <person name="Peelman F."/>
            <person name="De Bosscher K."/>
            <person name="Tavernier J."/>
        </authorList>
    </citation>
    <scope>PHOSPHORYLATION AT TYR-640</scope>
    <scope>SUBCELLULAR LOCATION</scope>
    <scope>CHARACTERIZATION OF VARIANT ADMIO1 PHE-640</scope>
</reference>
<reference key="57">
    <citation type="journal article" date="2018" name="Cell Rep.">
        <title>Salmonella Activation of STAT3 Signaling by SarA Effector Promotes Intracellular Replication and Production of IL-10.</title>
        <authorList>
            <person name="Jaslow S.L."/>
            <person name="Gibbs K.D."/>
            <person name="Fricke W.F."/>
            <person name="Wang L."/>
            <person name="Pittman K.J."/>
            <person name="Mammel M.K."/>
            <person name="Thaden J.T."/>
            <person name="Fowler V.G. Jr."/>
            <person name="Hammer G.E."/>
            <person name="Elfenbein J.R."/>
            <person name="Ko D.C."/>
        </authorList>
    </citation>
    <scope>INTERACTION WITH S.TYPHIMURIUM SARA (MICROBIAL INFECTION)</scope>
    <scope>PHOSPHORYLATION AT TYR-705 (MICROBIAL INFECTION)</scope>
</reference>
<reference key="58">
    <citation type="journal article" date="2019" name="Nature">
        <title>Fatty acids and cancer-amplified ZDHHC19 promote STAT3 activation through S-palmitoylation.</title>
        <authorList>
            <person name="Niu J."/>
            <person name="Sun Y."/>
            <person name="Chen B."/>
            <person name="Zheng B."/>
            <person name="Jarugumilli G.K."/>
            <person name="Walker S.R."/>
            <person name="Hata A.N."/>
            <person name="Mino-Kenudson M."/>
            <person name="Frank D.A."/>
            <person name="Wu X."/>
        </authorList>
    </citation>
    <scope>RETRACTED PAPER</scope>
</reference>
<reference key="59">
    <citation type="journal article" date="2020" name="Nature">
        <authorList>
            <person name="Niu J."/>
            <person name="Sun Y."/>
            <person name="Chen B."/>
            <person name="Zheng B."/>
            <person name="Jarugumilli G.K."/>
            <person name="Walker S.R."/>
            <person name="Hata A.N."/>
            <person name="Mino-Kenudson M."/>
            <person name="Frank D.A."/>
            <person name="Wu X."/>
        </authorList>
    </citation>
    <scope>RETRACTION NOTICE OF PUBMED:31462771</scope>
</reference>
<reference key="60">
    <citation type="journal article" date="2020" name="Nat. Cell Biol.">
        <title>PD-L1-mediated gasdermin C expression switches apoptosis to pyroptosis in cancer cells and facilitates tumour necrosis.</title>
        <authorList>
            <person name="Hou J."/>
            <person name="Zhao R."/>
            <person name="Xia W."/>
            <person name="Chang C.W."/>
            <person name="You Y."/>
            <person name="Hsu J.M."/>
            <person name="Nie L."/>
            <person name="Chen Y."/>
            <person name="Wang Y.C."/>
            <person name="Liu C."/>
            <person name="Wang W.J."/>
            <person name="Wu Y."/>
            <person name="Ke B."/>
            <person name="Hsu J.L."/>
            <person name="Huang K."/>
            <person name="Ye Z."/>
            <person name="Yang Y."/>
            <person name="Xia X."/>
            <person name="Li Y."/>
            <person name="Li C.W."/>
            <person name="Shao B."/>
            <person name="Tainer J.A."/>
            <person name="Hung M.C."/>
        </authorList>
    </citation>
    <scope>FUNCTION</scope>
    <scope>INTERACTION WITH CD274</scope>
    <scope>PHOSPHORYLATION AT TYR-705</scope>
</reference>
<reference key="61">
    <citation type="journal article" date="2020" name="Immunol. Lett.">
        <title>Prohibitin 1 interacts with signal transducer and activator of transcription 3 in T-helper 17 cells.</title>
        <authorList>
            <person name="Zhang J."/>
            <person name="Sun Z."/>
            <person name="Wu Q."/>
            <person name="Shen J."/>
        </authorList>
    </citation>
    <scope>SUBCELLULAR LOCATION</scope>
    <scope>INTERACTION WITH PHB</scope>
    <scope>PHOSPHORYLATION AT TYR-705 AND SER-727</scope>
    <scope>TISSUE SPECIFICITY</scope>
</reference>
<reference key="62">
    <citation type="journal article" date="2021" name="Cell. Mol. Life Sci.">
        <title>The ZIP6/ZIP10 heteromer is essential for the zinc-mediated trigger of mitosis.</title>
        <authorList>
            <person name="Nimmanon T."/>
            <person name="Ziliotto S."/>
            <person name="Ogle O."/>
            <person name="Burt A."/>
            <person name="Gee J.M.W."/>
            <person name="Andrews G.K."/>
            <person name="Kille P."/>
            <person name="Hogstrand C."/>
            <person name="Maret W."/>
            <person name="Taylor K.M."/>
        </authorList>
    </citation>
    <scope>IDENTIFICATION IN A COMPLEX WITH SLC39A6 AND SLC39A10</scope>
</reference>
<reference key="63">
    <citation type="journal article" date="2018" name="Sci. Rep.">
        <title>A double helical motif in OCIAD2 is essential for its localization, interactions and STAT3 activation.</title>
        <authorList>
            <person name="Sinha S."/>
            <person name="Bheemsetty V.A."/>
            <person name="Inamdar M.S."/>
        </authorList>
    </citation>
    <scope>INTERACTION WITH OCIAD2</scope>
</reference>
<reference evidence="67" key="64">
    <citation type="journal article" date="2017" name="Mol. Cell">
        <title>Distinct roles of Brd2 and Brd4 in potentiating the transcriptional program for th17 cell differentiation.</title>
        <authorList>
            <person name="Cheung K.L."/>
            <person name="Zhang F."/>
            <person name="Jaganathan A."/>
            <person name="Sharma R."/>
            <person name="Zhang Q."/>
            <person name="Konuma T."/>
            <person name="Shen T."/>
            <person name="Lee J.Y."/>
            <person name="Ren C."/>
            <person name="Chen C.H."/>
            <person name="Lu G."/>
            <person name="Olson M.R."/>
            <person name="Zhang W."/>
            <person name="Kaplan M.H."/>
            <person name="Littman D.R."/>
            <person name="Walsh M.J."/>
            <person name="Xiong H."/>
            <person name="Zeng L."/>
            <person name="Zhou M.M."/>
        </authorList>
    </citation>
    <scope>STRUCTURE BY NMR OF 81-92 IN COMPLEX WITH BRD2</scope>
    <scope>FUNCTION</scope>
    <scope>ACETYLATION AT LYS-87</scope>
    <scope>INTERACTION WITH BRD2</scope>
</reference>
<reference key="65">
    <citation type="journal article" date="2007" name="N. Engl. J. Med.">
        <title>STAT3 mutations in the hyper-IgE syndrome.</title>
        <authorList>
            <person name="Holland S.M."/>
            <person name="DeLeo F.R."/>
            <person name="Elloumi H.Z."/>
            <person name="Hsu A.P."/>
            <person name="Uzel G."/>
            <person name="Brodsky N."/>
            <person name="Freeman A.F."/>
            <person name="Demidowich A."/>
            <person name="Davis J."/>
            <person name="Turner M.L."/>
            <person name="Anderson V.L."/>
            <person name="Darnell D.N."/>
            <person name="Welch P.A."/>
            <person name="Kuhns D.B."/>
            <person name="Frucht D.M."/>
            <person name="Malech H.L."/>
            <person name="Gallin J.I."/>
            <person name="Kobayashi S.D."/>
            <person name="Whitney A.R."/>
            <person name="Voyich J.M."/>
            <person name="Musser J.M."/>
            <person name="Woellner C."/>
            <person name="Schaffer A.A."/>
            <person name="Puck J.M."/>
            <person name="Grimbacher B."/>
        </authorList>
    </citation>
    <scope>VARIANTS HIES1 GLN-382; LEU-382; TRP-382; LEU-384; SER-384; GLN-423; VAL-463 DEL; ASN-611; VAL-621; ILE-622; LEU-637; MET-637; GLN-644 DEL AND CYS-657</scope>
</reference>
<reference key="66">
    <citation type="journal article" date="2007" name="Nature">
        <title>Dominant-negative mutations in the DNA-binding domain of STAT3 cause hyper-IgE syndrome.</title>
        <authorList>
            <person name="Minegishi Y."/>
            <person name="Saito M."/>
            <person name="Tsuchiya S."/>
            <person name="Tsuge I."/>
            <person name="Takada H."/>
            <person name="Hara T."/>
            <person name="Kawamura N."/>
            <person name="Ariga T."/>
            <person name="Pasic S."/>
            <person name="Stojkovic O."/>
            <person name="Metin A."/>
            <person name="Karasuyama H."/>
        </authorList>
    </citation>
    <scope>VARIANTS HIES1 GLN-382; TRP-382; ILE-389; TYR-437 AND VAL-463 DEL</scope>
    <scope>CHARACTERIZATION OF VARIANTS HIES1 GLN-382; TRP-382; ILE-389; TYR-437 AND VAL-463 DEL</scope>
</reference>
<reference key="67">
    <citation type="journal article" date="2012" name="Allergy Rhinol. (Providence)">
        <title>Signal transducer and activator of transcription 3 mutation with invasive eosinophilic disease.</title>
        <authorList>
            <person name="Crosby K."/>
            <person name="Swender D."/>
            <person name="Chernin L."/>
            <person name="Hafez-Khayyata S."/>
            <person name="Ochs H."/>
            <person name="Tcheurekdjian H."/>
            <person name="Hostoffer R."/>
        </authorList>
    </citation>
    <scope>VARIANT HIES1 ILE-389</scope>
</reference>
<reference key="68">
    <citation type="journal article" date="2014" name="Nat. Genet.">
        <title>Activating germline mutations in STAT3 cause early-onset multi-organ autoimmune disease.</title>
        <authorList>
            <person name="Flanagan S.E."/>
            <person name="Haapaniemi E."/>
            <person name="Russell M.A."/>
            <person name="Caswell R."/>
            <person name="Lango Allen H."/>
            <person name="De Franco E."/>
            <person name="McDonald T.J."/>
            <person name="Rajala H."/>
            <person name="Ramelius A."/>
            <person name="Barton J."/>
            <person name="Heiskanen K."/>
            <person name="Heiskanen-Kosma T."/>
            <person name="Kajosaari M."/>
            <person name="Murphy N.P."/>
            <person name="Milenkovic T."/>
            <person name="Seppaenen M."/>
            <person name="Lernmark A."/>
            <person name="Mustjoki S."/>
            <person name="Otonkoski T."/>
            <person name="Kere J."/>
            <person name="Morgan N.G."/>
            <person name="Ellard S."/>
            <person name="Hattersley A.T."/>
        </authorList>
    </citation>
    <scope>VARIANTS ADMIO1 ARG-392; LYS-646; ASN-658 AND MET-716</scope>
    <scope>INVOLVEMENT IN ADMIO1</scope>
</reference>
<reference key="69">
    <citation type="journal article" date="2015" name="Blood">
        <title>Early-onset lymphoproliferation and autoimmunity caused by germline STAT3 gain-of-function mutations.</title>
        <authorList>
            <person name="Milner J.D."/>
            <person name="Vogel T.P."/>
            <person name="Forbes L."/>
            <person name="Ma C.A."/>
            <person name="Stray-Pedersen A."/>
            <person name="Niemela J.E."/>
            <person name="Lyons J.J."/>
            <person name="Engelhardt K.R."/>
            <person name="Zhang Y."/>
            <person name="Topcagic N."/>
            <person name="Roberson E.D."/>
            <person name="Matthews H."/>
            <person name="Verbsky J.W."/>
            <person name="Dasu T."/>
            <person name="Vargas-Hernandez A."/>
            <person name="Varghese N."/>
            <person name="McClain K.L."/>
            <person name="Karam L.B."/>
            <person name="Nahmod K."/>
            <person name="Makedonas G."/>
            <person name="Mace E.M."/>
            <person name="Sorte H.S."/>
            <person name="Perminow G."/>
            <person name="Rao V.K."/>
            <person name="O'Connell M.P."/>
            <person name="Price S."/>
            <person name="Su H.C."/>
            <person name="Butrick M."/>
            <person name="McElwee J."/>
            <person name="Hughes J.D."/>
            <person name="Willet J."/>
            <person name="Swan D."/>
            <person name="Xu Y."/>
            <person name="Santibanez-Koref M."/>
            <person name="Slowik V."/>
            <person name="Dinwiddie D.L."/>
            <person name="Ciaccio C.E."/>
            <person name="Saunders C.J."/>
            <person name="Septer S."/>
            <person name="Kingsmore S.F."/>
            <person name="White A.J."/>
            <person name="Cant A.J."/>
            <person name="Hambleton S."/>
            <person name="Cooper M.A."/>
        </authorList>
    </citation>
    <scope>VARIANTS ADMIO1 TRP-152; HIS-344; PHE-353; LYS-415; LYS-420; ARG-421; ILE-663; THR-703 AND MET-716</scope>
    <scope>CHARACTERIZATION OF VARIANTS ADMIO1 TRP-152; HIS-344; PHE-353; LYS-415; LYS-420; ARG-421; THR-703 AND MET-716</scope>
    <scope>INVOLVEMENT IN ADMIO1</scope>
</reference>
<reference key="70">
    <citation type="journal article" date="2016" name="Clin. Genet.">
        <title>Functional characterization of two new STAT3 mutations associated with hyper-IgE syndrome in a Mexican cohort.</title>
        <authorList>
            <person name="Alcantara-Montiel J.C."/>
            <person name="Staines-Boone T."/>
            <person name="Lopez-Herrera G."/>
            <person name="Espinosa-Rosales F."/>
            <person name="Espinosa-Padilla S.E."/>
            <person name="Hernandez-Rivas R."/>
            <person name="Santos-Argumedo L."/>
        </authorList>
    </citation>
    <scope>VARIANTS HIES1 TRP-382; TYR-395; TYR-425; MET-637 AND CYS-657</scope>
    <scope>CHARACTERIZATION OF VARIANTS HIES1 TRP-382; TYR-395; TYR-425; MET-637 AND CYS-657</scope>
    <scope>PHOSPHORYLATION AT TYR-705 AND SER-727</scope>
</reference>
<reference key="71">
    <citation type="journal article" date="2017" name="Clin. Immunol.">
        <title>STAT3 gain-of-function mutations associated with autoimmune lymphoproliferative syndrome like disease deregulate lymphocyte apoptosis and can be targeted by BH3 mimetic compounds.</title>
        <authorList>
            <person name="Nabhani S."/>
            <person name="Schipp C."/>
            <person name="Miskin H."/>
            <person name="Levin C."/>
            <person name="Postovsky S."/>
            <person name="Dujovny T."/>
            <person name="Koren A."/>
            <person name="Harlev D."/>
            <person name="Bis A.M."/>
            <person name="Auer F."/>
            <person name="Keller B."/>
            <person name="Warnatz K."/>
            <person name="Gombert M."/>
            <person name="Ginzel S."/>
            <person name="Borkhardt A."/>
            <person name="Stepensky P."/>
            <person name="Fischer U."/>
        </authorList>
    </citation>
    <scope>VARIANTS ADMIO1 HIS-278 AND THR-394</scope>
    <scope>CHARACTERIZATION OF VARIANTS ADMIO1 HIS-278; ARG-392 AND THR-394</scope>
</reference>
<reference key="72">
    <citation type="journal article" date="2017" name="Horm. Res. Paediatr.">
        <title>Short stature in a boy with multiple early-onset autoimmune conditions due to a STAT3 activating mutation: could intracellular growth hormone signalling be compromised?</title>
        <authorList>
            <person name="Sediva H."/>
            <person name="Dusatkova P."/>
            <person name="Kanderova V."/>
            <person name="Obermannova B."/>
            <person name="Kayserova J."/>
            <person name="Sramkova L."/>
            <person name="Zemkova D."/>
            <person name="Elblova L."/>
            <person name="Svaton M."/>
            <person name="Zachova R."/>
            <person name="Kolouskova S."/>
            <person name="Fronkova E."/>
            <person name="Sumnik Z."/>
            <person name="Sediva A."/>
            <person name="Lebl J."/>
            <person name="Pruhova S."/>
        </authorList>
    </citation>
    <scope>VARIANT ADMIO1 LEU-715</scope>
    <scope>INVOLVEMENT IN ADMIO1</scope>
</reference>
<reference key="73">
    <citation type="journal article" date="2017" name="Diabetes">
        <title>An activating mutation in STAT3 results in neonatal diabetes through reduced insulin synthesis.</title>
        <authorList>
            <person name="Velayos T."/>
            <person name="Martinez R."/>
            <person name="Alonso M."/>
            <person name="Garcia-Etxebarria K."/>
            <person name="Aguayo A."/>
            <person name="Camarero C."/>
            <person name="Urrutia I."/>
            <person name="Martinez de LaPiscina I."/>
            <person name="Barrio R."/>
            <person name="Santin I."/>
            <person name="Castano L."/>
        </authorList>
    </citation>
    <scope>VARIANT ADMIO1 SER-330</scope>
    <scope>CHARACTERIZATION OF VARIANT ADMIO1 SER-330</scope>
</reference>
<reference key="74">
    <citation type="journal article" date="2023" name="J. Allergy Clin. Immunol.">
        <title>Monogenic early-onset lymphoproliferation and autoimmunity: Natural history of STAT3 gain-of-function syndrome.</title>
        <authorList>
            <consortium name="STAT3 GOF Working Group"/>
            <person name="Leiding J.W."/>
            <person name="Vogel T.P."/>
            <person name="Santarlas V.G.J."/>
            <person name="Mhaskar R."/>
            <person name="Smith M.R."/>
            <person name="Carisey A."/>
            <person name="Vargas-Hernandez A."/>
            <person name="Silva-Carmona M."/>
            <person name="Heeg M."/>
            <person name="Rensing-Ehl A."/>
            <person name="Neven B."/>
            <person name="Hadjadj J."/>
            <person name="Hambleton S."/>
            <person name="Ronan Leahy T."/>
            <person name="Meesilpavikai K."/>
            <person name="Cunningham-Rundles C."/>
            <person name="Dutmer C.M."/>
            <person name="Sharapova S.O."/>
            <person name="Taskinen M."/>
            <person name="Chua I."/>
            <person name="Hague R."/>
            <person name="Klemann C."/>
            <person name="Kostyuchenko L."/>
            <person name="Morio T."/>
            <person name="Thatayatikom A."/>
            <person name="Ozen A."/>
            <person name="Scherbina A."/>
            <person name="Bauer C.S."/>
            <person name="Flanagan S.E."/>
            <person name="Gambineri E."/>
            <person name="Giovannini-Chami L."/>
            <person name="Heimall J."/>
            <person name="Sullivan K.E."/>
            <person name="Allenspach E."/>
            <person name="Romberg N."/>
            <person name="Deane S.G."/>
            <person name="Prince B.T."/>
            <person name="Rose M.J."/>
            <person name="Bohnsack J."/>
            <person name="Mousallem T."/>
            <person name="Jesudas R."/>
            <person name="Santos Vilela M.M.D."/>
            <person name="O'Sullivan M."/>
            <person name="Pachlopnik Schmid J."/>
            <person name="Pruhova S."/>
            <person name="Klocperk A."/>
            <person name="Rees M."/>
            <person name="Su H."/>
            <person name="Bahna S."/>
            <person name="Baris S."/>
            <person name="Bartnikas L.M."/>
            <person name="Chang Berger A."/>
            <person name="Briggs T.A."/>
            <person name="Brothers S."/>
            <person name="Bundy V."/>
            <person name="Chan A.Y."/>
            <person name="Chandrakasan S."/>
            <person name="Christiansen M."/>
            <person name="Cole T."/>
            <person name="Cook M.C."/>
            <person name="Desai M.M."/>
            <person name="Fischer U."/>
            <person name="Fulcher D.A."/>
            <person name="Gallo S."/>
            <person name="Gauthier A."/>
            <person name="Gennery A.R."/>
            <person name="Goncalo Marques J."/>
            <person name="Gottrand F."/>
            <person name="Grimbacher B."/>
            <person name="Grunebaum E."/>
            <person name="Haapaniemi E."/>
            <person name="Haemaelaeinen S."/>
            <person name="Heiskanen K."/>
            <person name="Heiskanen-Kosma T."/>
            <person name="Hoffman H.M."/>
            <person name="Gonzalez-Granado L.I."/>
            <person name="Guerrerio A.L."/>
            <person name="Kainulainen L."/>
            <person name="Kumar A."/>
            <person name="Lawrence M.G."/>
            <person name="Levin C."/>
            <person name="Martelius T."/>
            <person name="Neth O."/>
            <person name="Olbrich P."/>
            <person name="Palma A."/>
            <person name="Patel N.C."/>
            <person name="Pozos T."/>
            <person name="Preece K."/>
            <person name="Lugo Reyes S.O."/>
            <person name="Russell M.A."/>
            <person name="Schejter Y."/>
            <person name="Seroogy C."/>
            <person name="Sinclair J."/>
            <person name="Skevofilax E."/>
            <person name="Suan D."/>
            <person name="Suez D."/>
            <person name="Szabolcs P."/>
            <person name="Velasco H."/>
            <person name="Warnatz K."/>
            <person name="Walkovich K."/>
            <person name="Worth A."/>
            <person name="Seppaenen M.R.J."/>
            <person name="Torgerson T.R."/>
            <person name="Sogkas G."/>
            <person name="Ehl S."/>
            <person name="Tangye S.G."/>
            <person name="Cooper M.A."/>
            <person name="Milner J.D."/>
            <person name="Forbes Satter L.R."/>
        </authorList>
    </citation>
    <scope>VARIANTS ADMIO1 HIS-70; TRP-103; TRP-107; TRP-152; ARG-162; ASP-166; LYS-166; SER-174; ALA-218; PRO-260; CYS-278; HIS-278; GLN-302; TRP-325; ARG-331; HIS-344; PHE-353; ARG-361; ARG-387; ALA-389; ARG-389; SER-389; THR-394; LEU-408; GLN-415; LYS-415; GLY-415; ARG-419; LYS-420; ARG-421; ARG-422; ILE-443; ASP-447; GLU-448; LYS-506; ARG-546; PHE-640; ARG-643; LYS-646; ARG-658; ILE-663; TYR-664; LEU-715 AND MET-716</scope>
</reference>
<reference key="75">
    <citation type="journal article" date="2024" name="J. Allergy Clin. Immunol.">
        <authorList>
            <person name="Leiding J.W."/>
            <person name="Vogel T.P."/>
            <person name="Santarlas V.G.J."/>
            <person name="Mhaskar R."/>
            <person name="Smith M.R."/>
            <person name="Carisey A."/>
            <person name="Vargas-Hernandez A."/>
            <person name="Silva-Carmona M."/>
            <person name="Heeg M."/>
            <person name="Rensing-Ehl A."/>
            <person name="Neven B."/>
            <person name="Hadjadj J."/>
            <person name="Hambleton S."/>
            <person name="Ronan Leahy T."/>
            <person name="Meesilpavikai K."/>
            <person name="Cunningham-Rundles C."/>
            <person name="Dutmer C.M."/>
            <person name="Sharapova S.O."/>
            <person name="Taskinen M."/>
            <person name="Chua I."/>
            <person name="Hague R."/>
            <person name="Klemann C."/>
            <person name="Kostyuchenko L."/>
            <person name="Morio T."/>
            <person name="Thatayatikom A."/>
            <person name="Ozen A."/>
            <person name="Scherbina A."/>
            <person name="Bauer C.S."/>
            <person name="Flanagan S.E."/>
            <person name="Gambineri E."/>
            <person name="Giovannini-Chami L."/>
            <person name="Heimall J."/>
            <person name="Sullivan K.E."/>
            <person name="Allenspach E."/>
            <person name="Romberg N."/>
            <person name="Deane S.G."/>
            <person name="Prince B.T."/>
            <person name="Rose M.J."/>
            <person name="Bohnsack J."/>
            <person name="Mousallem T."/>
            <person name="Jesudas R."/>
            <person name="Santos Vilela M.M.D."/>
            <person name="O'Sullivan M."/>
            <person name="Pachlopnik Schmid J."/>
            <person name="Pruhova S."/>
            <person name="Klocperk A."/>
            <person name="Rees M."/>
            <person name="Su H."/>
            <person name="Bahna S."/>
            <person name="Baris S."/>
            <person name="Bartnikas L.M."/>
            <person name="Chang Berger A."/>
            <person name="Briggs T.A."/>
            <person name="Brothers S."/>
            <person name="Bundy V."/>
            <person name="Chan A.Y."/>
            <person name="Chandrakasan S."/>
            <person name="Christiansen M."/>
            <person name="Cole T."/>
            <person name="Cook M.C."/>
            <person name="Desai M.M."/>
            <person name="Fischer U."/>
            <person name="Fulcher D.A."/>
            <person name="Gallo S."/>
            <person name="Gauthier A."/>
            <person name="Gennery A.R."/>
            <person name="Goncalo Marques J."/>
            <person name="Gottrand F."/>
            <person name="Grimbacher B."/>
            <person name="Grunebaum E."/>
            <person name="Haapaniemi E."/>
            <person name="Haemaelaeinen S."/>
            <person name="Heiskanen K."/>
            <person name="Heiskanen-Kosma T."/>
            <person name="Hoffman H.M."/>
            <person name="Gonzalez-Granado L.I."/>
            <person name="Guerrerio A.L."/>
            <person name="Kainulainen L."/>
            <person name="Kumar A."/>
            <person name="Lawrence M.G."/>
            <person name="Levin C."/>
            <person name="Martelius T."/>
            <person name="Neth O."/>
            <person name="Olbrich P."/>
            <person name="Palma A."/>
            <person name="Patel N.C."/>
            <person name="Pozos T."/>
            <person name="Preece K."/>
            <person name="Lugo Reyes S.O."/>
            <person name="Russell M.A."/>
            <person name="Schejter Y."/>
            <person name="Seroogy C."/>
            <person name="Sinclair J."/>
            <person name="Skevofilax E."/>
            <person name="Suan D."/>
            <person name="Suez D."/>
            <person name="Szabolcs P."/>
            <person name="Velasco H."/>
            <person name="Warnatz K."/>
            <person name="Walkovich K."/>
            <person name="Worth A."/>
            <person name="Seppaenen M.R.J."/>
            <person name="Torgerson T.R."/>
            <person name="Sogkas G."/>
            <person name="Ehl S."/>
            <person name="Tangye S.G."/>
            <person name="Cooper M.A."/>
            <person name="Milner J.D."/>
            <person name="Forbes Satter L.R."/>
        </authorList>
    </citation>
    <scope>ERRATUM OF PUBMED:36228738</scope>
</reference>
<reference key="76">
    <citation type="journal article" date="2024" name="Mol. Genet. Genomic Med.">
        <title>A novel gain-of-function STAT3 variant in infantile-onset diabetes associated with multiorgan autoimmunity.</title>
        <authorList>
            <person name="Zhou Q."/>
            <person name="Chen D."/>
            <person name="Yu J."/>
            <person name="Zheng B."/>
            <person name="Zhou W."/>
            <person name="Jia Z."/>
            <person name="Zhang A."/>
            <person name="Gu W."/>
        </authorList>
    </citation>
    <scope>VARIANT ADMIO1 LYS-357</scope>
    <scope>CHARACTERIZATION OF VARIANT ADMIO1 LYS-357</scope>
    <scope>FUNCTION</scope>
</reference>
<dbReference type="EMBL" id="L29277">
    <property type="protein sequence ID" value="AAA58374.1"/>
    <property type="molecule type" value="mRNA"/>
</dbReference>
<dbReference type="EMBL" id="AJ012463">
    <property type="protein sequence ID" value="CAA10032.1"/>
    <property type="molecule type" value="mRNA"/>
</dbReference>
<dbReference type="EMBL" id="JB252046">
    <property type="status" value="NOT_ANNOTATED_CDS"/>
    <property type="molecule type" value="mRNA"/>
</dbReference>
<dbReference type="EMBL" id="AK291933">
    <property type="protein sequence ID" value="BAF84622.1"/>
    <property type="molecule type" value="mRNA"/>
</dbReference>
<dbReference type="EMBL" id="AY572796">
    <property type="protein sequence ID" value="AAS66986.1"/>
    <property type="molecule type" value="Genomic_DNA"/>
</dbReference>
<dbReference type="EMBL" id="AC087691">
    <property type="status" value="NOT_ANNOTATED_CDS"/>
    <property type="molecule type" value="Genomic_DNA"/>
</dbReference>
<dbReference type="EMBL" id="CH471152">
    <property type="protein sequence ID" value="EAW60822.1"/>
    <property type="molecule type" value="Genomic_DNA"/>
</dbReference>
<dbReference type="EMBL" id="BC000627">
    <property type="protein sequence ID" value="AAH00627.1"/>
    <property type="molecule type" value="mRNA"/>
</dbReference>
<dbReference type="EMBL" id="BC014482">
    <property type="protein sequence ID" value="AAH14482.1"/>
    <property type="molecule type" value="mRNA"/>
</dbReference>
<dbReference type="EMBL" id="AF029311">
    <property type="protein sequence ID" value="AAB84254.1"/>
    <property type="molecule type" value="mRNA"/>
</dbReference>
<dbReference type="CCDS" id="CCDS32656.1">
    <molecule id="P40763-1"/>
</dbReference>
<dbReference type="CCDS" id="CCDS32657.1">
    <molecule id="P40763-2"/>
</dbReference>
<dbReference type="CCDS" id="CCDS59288.1">
    <molecule id="P40763-3"/>
</dbReference>
<dbReference type="PIR" id="A54444">
    <property type="entry name" value="A54444"/>
</dbReference>
<dbReference type="RefSeq" id="NP_001356441.1">
    <molecule id="P40763-1"/>
    <property type="nucleotide sequence ID" value="NM_001369512.1"/>
</dbReference>
<dbReference type="RefSeq" id="NP_001356442.1">
    <molecule id="P40763-1"/>
    <property type="nucleotide sequence ID" value="NM_001369513.1"/>
</dbReference>
<dbReference type="RefSeq" id="NP_001356443.1">
    <molecule id="P40763-2"/>
    <property type="nucleotide sequence ID" value="NM_001369514.1"/>
</dbReference>
<dbReference type="RefSeq" id="NP_001356445.1">
    <molecule id="P40763-2"/>
    <property type="nucleotide sequence ID" value="NM_001369516.1"/>
</dbReference>
<dbReference type="RefSeq" id="NP_001356446.1">
    <molecule id="P40763-3"/>
    <property type="nucleotide sequence ID" value="NM_001369517.1"/>
</dbReference>
<dbReference type="RefSeq" id="NP_001356447.1">
    <molecule id="P40763-3"/>
    <property type="nucleotide sequence ID" value="NM_001369518.1"/>
</dbReference>
<dbReference type="RefSeq" id="NP_003141.2">
    <molecule id="P40763-2"/>
    <property type="nucleotide sequence ID" value="NM_003150.3"/>
</dbReference>
<dbReference type="RefSeq" id="NP_644805.1">
    <molecule id="P40763-1"/>
    <property type="nucleotide sequence ID" value="NM_139276.3"/>
</dbReference>
<dbReference type="RefSeq" id="NP_998827.1">
    <molecule id="P40763-3"/>
    <property type="nucleotide sequence ID" value="NM_213662.2"/>
</dbReference>
<dbReference type="RefSeq" id="XP_005257673.2">
    <property type="nucleotide sequence ID" value="XM_005257616.3"/>
</dbReference>
<dbReference type="RefSeq" id="XP_005257674.2">
    <property type="nucleotide sequence ID" value="XM_005257617.3"/>
</dbReference>
<dbReference type="RefSeq" id="XP_011523447.1">
    <property type="nucleotide sequence ID" value="XM_011525145.2"/>
</dbReference>
<dbReference type="RefSeq" id="XP_011523448.1">
    <property type="nucleotide sequence ID" value="XM_011525146.2"/>
</dbReference>
<dbReference type="RefSeq" id="XP_016880461.1">
    <property type="nucleotide sequence ID" value="XM_017024972.1"/>
</dbReference>
<dbReference type="RefSeq" id="XP_016880464.1">
    <property type="nucleotide sequence ID" value="XM_017024975.1"/>
</dbReference>
<dbReference type="RefSeq" id="XP_047292541.1">
    <molecule id="P40763-3"/>
    <property type="nucleotide sequence ID" value="XM_047436585.1"/>
</dbReference>
<dbReference type="RefSeq" id="XP_054172966.1">
    <molecule id="P40763-3"/>
    <property type="nucleotide sequence ID" value="XM_054316991.1"/>
</dbReference>
<dbReference type="PDB" id="5AX3">
    <property type="method" value="X-ray"/>
    <property type="resolution" value="2.98 A"/>
    <property type="chains" value="B=571-582"/>
</dbReference>
<dbReference type="PDB" id="5U5S">
    <property type="method" value="NMR"/>
    <property type="chains" value="B=81-92"/>
</dbReference>
<dbReference type="PDB" id="6NJS">
    <property type="method" value="X-ray"/>
    <property type="resolution" value="2.70 A"/>
    <property type="chains" value="A=127-688"/>
</dbReference>
<dbReference type="PDB" id="6NUQ">
    <property type="method" value="X-ray"/>
    <property type="resolution" value="3.15 A"/>
    <property type="chains" value="A=127-688"/>
</dbReference>
<dbReference type="PDB" id="6QHD">
    <property type="method" value="X-ray"/>
    <property type="resolution" value="2.85 A"/>
    <property type="chains" value="A/B=127-715"/>
</dbReference>
<dbReference type="PDB" id="6TLC">
    <property type="method" value="X-ray"/>
    <property type="resolution" value="2.90 A"/>
    <property type="chains" value="A/B=127-722"/>
</dbReference>
<dbReference type="PDBsum" id="5AX3"/>
<dbReference type="PDBsum" id="5U5S"/>
<dbReference type="PDBsum" id="6NJS"/>
<dbReference type="PDBsum" id="6NUQ"/>
<dbReference type="PDBsum" id="6QHD"/>
<dbReference type="PDBsum" id="6TLC"/>
<dbReference type="SMR" id="P40763"/>
<dbReference type="BioGRID" id="112651">
    <property type="interactions" value="438"/>
</dbReference>
<dbReference type="ComplexPortal" id="CPX-6041">
    <property type="entry name" value="STAT1/STAT3 complex"/>
</dbReference>
<dbReference type="ComplexPortal" id="CPX-6043">
    <property type="entry name" value="STAT3/STAT5A complex"/>
</dbReference>
<dbReference type="ComplexPortal" id="CPX-6044">
    <property type="entry name" value="STAT3/STAT5B complex"/>
</dbReference>
<dbReference type="ComplexPortal" id="CPX-6046">
    <property type="entry name" value="STAT3/STAT4 complex"/>
</dbReference>
<dbReference type="ComplexPortal" id="CPX-6049">
    <property type="entry name" value="STAT3 homodimer"/>
</dbReference>
<dbReference type="CORUM" id="P40763"/>
<dbReference type="DIP" id="DIP-33584N"/>
<dbReference type="ELM" id="P40763"/>
<dbReference type="FunCoup" id="P40763">
    <property type="interactions" value="3234"/>
</dbReference>
<dbReference type="IntAct" id="P40763">
    <property type="interactions" value="305"/>
</dbReference>
<dbReference type="MINT" id="P40763"/>
<dbReference type="STRING" id="9606.ENSP00000264657"/>
<dbReference type="BindingDB" id="P40763"/>
<dbReference type="ChEMBL" id="CHEMBL4026"/>
<dbReference type="DrugBank" id="DB00459">
    <property type="generic name" value="Acitretin"/>
</dbReference>
<dbReference type="DrugBank" id="DB05513">
    <property type="generic name" value="Atiprimod"/>
</dbReference>
<dbReference type="DrugBank" id="DB00482">
    <property type="generic name" value="Celecoxib"/>
</dbReference>
<dbReference type="DrugBank" id="DB11259">
    <property type="generic name" value="Diosmetin"/>
</dbReference>
<dbReference type="DrugBank" id="DB05959">
    <property type="generic name" value="ENMD-1198"/>
</dbReference>
<dbReference type="DrugBank" id="DB12116">
    <property type="generic name" value="Epigallocatechin gallate"/>
</dbReference>
<dbReference type="DrugBank" id="DB05475">
    <property type="generic name" value="Golotimod"/>
</dbReference>
<dbReference type="DrugBank" id="DB15584">
    <property type="generic name" value="Luteolin"/>
</dbReference>
<dbReference type="DrugBank" id="DB16051">
    <property type="generic name" value="MOL-4239"/>
</dbReference>
<dbReference type="DrugBank" id="DB12155">
    <property type="generic name" value="Napabucasin"/>
</dbReference>
<dbReference type="DrugBank" id="DB17490">
    <property type="generic name" value="NT-219"/>
</dbReference>
<dbReference type="DrugBank" id="DB16630">
    <property type="generic name" value="OPB-111077"/>
</dbReference>
<dbReference type="DrugBank" id="DB04216">
    <property type="generic name" value="Quercetin"/>
</dbReference>
<dbReference type="DrugBank" id="DB17578">
    <property type="generic name" value="TTI-101"/>
</dbReference>
<dbReference type="DrugBank" id="DB12679">
    <property type="generic name" value="WP-1066"/>
</dbReference>
<dbReference type="DrugCentral" id="P40763"/>
<dbReference type="GuidetoPHARMACOLOGY" id="2994"/>
<dbReference type="MoonDB" id="P40763">
    <property type="type" value="Predicted"/>
</dbReference>
<dbReference type="GlyCosmos" id="P40763">
    <property type="glycosylation" value="6 sites, 2 glycans"/>
</dbReference>
<dbReference type="GlyGen" id="P40763">
    <property type="glycosylation" value="7 sites, 2 O-linked glycans (6 sites)"/>
</dbReference>
<dbReference type="iPTMnet" id="P40763"/>
<dbReference type="MetOSite" id="P40763"/>
<dbReference type="PhosphoSitePlus" id="P40763"/>
<dbReference type="SwissPalm" id="P40763"/>
<dbReference type="BioMuta" id="STAT3"/>
<dbReference type="DMDM" id="48429227"/>
<dbReference type="CPTAC" id="CPTAC-1275"/>
<dbReference type="CPTAC" id="CPTAC-1276"/>
<dbReference type="CPTAC" id="CPTAC-1751"/>
<dbReference type="CPTAC" id="CPTAC-5962"/>
<dbReference type="CPTAC" id="non-CPTAC-5439"/>
<dbReference type="CPTAC" id="non-CPTAC-5440"/>
<dbReference type="CPTAC" id="non-CPTAC-5713"/>
<dbReference type="CPTAC" id="non-CPTAC-5714"/>
<dbReference type="jPOST" id="P40763"/>
<dbReference type="MassIVE" id="P40763"/>
<dbReference type="PaxDb" id="9606-ENSP00000264657"/>
<dbReference type="PeptideAtlas" id="P40763"/>
<dbReference type="ProteomicsDB" id="55378">
    <molecule id="P40763-1"/>
</dbReference>
<dbReference type="ProteomicsDB" id="55379">
    <molecule id="P40763-2"/>
</dbReference>
<dbReference type="Pumba" id="P40763"/>
<dbReference type="ABCD" id="P40763">
    <property type="antibodies" value="38 sequenced antibodies"/>
</dbReference>
<dbReference type="Antibodypedia" id="660">
    <property type="antibodies" value="2579 antibodies from 55 providers"/>
</dbReference>
<dbReference type="CPTC" id="P40763">
    <property type="antibodies" value="2 antibodies"/>
</dbReference>
<dbReference type="DNASU" id="6774"/>
<dbReference type="Ensembl" id="ENST00000264657.10">
    <molecule id="P40763-1"/>
    <property type="protein sequence ID" value="ENSP00000264657.4"/>
    <property type="gene ID" value="ENSG00000168610.17"/>
</dbReference>
<dbReference type="Ensembl" id="ENST00000404395.3">
    <molecule id="P40763-2"/>
    <property type="protein sequence ID" value="ENSP00000384943.3"/>
    <property type="gene ID" value="ENSG00000168610.17"/>
</dbReference>
<dbReference type="Ensembl" id="ENST00000585517.5">
    <molecule id="P40763-3"/>
    <property type="protein sequence ID" value="ENSP00000467000.1"/>
    <property type="gene ID" value="ENSG00000168610.17"/>
</dbReference>
<dbReference type="Ensembl" id="ENST00000588969.5">
    <molecule id="P40763-1"/>
    <property type="protein sequence ID" value="ENSP00000467985.1"/>
    <property type="gene ID" value="ENSG00000168610.17"/>
</dbReference>
<dbReference type="Ensembl" id="ENST00000677030.1">
    <molecule id="P40763-3"/>
    <property type="protein sequence ID" value="ENSP00000503662.1"/>
    <property type="gene ID" value="ENSG00000168610.17"/>
</dbReference>
<dbReference type="Ensembl" id="ENST00000677723.1">
    <molecule id="P40763-2"/>
    <property type="protein sequence ID" value="ENSP00000503574.1"/>
    <property type="gene ID" value="ENSG00000168610.17"/>
</dbReference>
<dbReference type="Ensembl" id="ENST00000678044.1">
    <molecule id="P40763-1"/>
    <property type="protein sequence ID" value="ENSP00000503102.1"/>
    <property type="gene ID" value="ENSG00000168610.17"/>
</dbReference>
<dbReference type="Ensembl" id="ENST00000678827.1">
    <molecule id="P40763-3"/>
    <property type="protein sequence ID" value="ENSP00000503634.1"/>
    <property type="gene ID" value="ENSG00000168610.17"/>
</dbReference>
<dbReference type="Ensembl" id="ENST00000678906.1">
    <molecule id="P40763-1"/>
    <property type="protein sequence ID" value="ENSP00000504184.1"/>
    <property type="gene ID" value="ENSG00000168610.17"/>
</dbReference>
<dbReference type="Ensembl" id="ENST00000678960.1">
    <molecule id="P40763-1"/>
    <property type="protein sequence ID" value="ENSP00000503181.1"/>
    <property type="gene ID" value="ENSG00000168610.17"/>
</dbReference>
<dbReference type="Ensembl" id="ENST00000679014.1">
    <molecule id="P40763-2"/>
    <property type="protein sequence ID" value="ENSP00000503237.1"/>
    <property type="gene ID" value="ENSG00000168610.17"/>
</dbReference>
<dbReference type="Ensembl" id="ENST00000715205.1">
    <molecule id="P40763-1"/>
    <property type="protein sequence ID" value="ENSP00000520412.1"/>
    <property type="gene ID" value="ENSG00000168610.17"/>
</dbReference>
<dbReference type="GeneID" id="6774"/>
<dbReference type="KEGG" id="hsa:6774"/>
<dbReference type="MANE-Select" id="ENST00000264657.10">
    <property type="protein sequence ID" value="ENSP00000264657.4"/>
    <property type="RefSeq nucleotide sequence ID" value="NM_139276.3"/>
    <property type="RefSeq protein sequence ID" value="NP_644805.1"/>
</dbReference>
<dbReference type="UCSC" id="uc002hzl.2">
    <molecule id="P40763-1"/>
    <property type="organism name" value="human"/>
</dbReference>
<dbReference type="AGR" id="HGNC:11364"/>
<dbReference type="CTD" id="6774"/>
<dbReference type="DisGeNET" id="6774"/>
<dbReference type="GeneCards" id="STAT3"/>
<dbReference type="GeneReviews" id="STAT3"/>
<dbReference type="HGNC" id="HGNC:11364">
    <property type="gene designation" value="STAT3"/>
</dbReference>
<dbReference type="HPA" id="ENSG00000168610">
    <property type="expression patterns" value="Low tissue specificity"/>
</dbReference>
<dbReference type="MalaCards" id="STAT3"/>
<dbReference type="MIM" id="102582">
    <property type="type" value="gene"/>
</dbReference>
<dbReference type="MIM" id="147060">
    <property type="type" value="phenotype"/>
</dbReference>
<dbReference type="MIM" id="615952">
    <property type="type" value="phenotype"/>
</dbReference>
<dbReference type="neXtProt" id="NX_P40763"/>
<dbReference type="OpenTargets" id="ENSG00000168610"/>
<dbReference type="Orphanet" id="520">
    <property type="disease" value="Acute promyelocytic leukemia"/>
</dbReference>
<dbReference type="Orphanet" id="2314">
    <property type="disease" value="Autosomal dominant hyper-IgE syndrome due to STAT3 deficiency"/>
</dbReference>
<dbReference type="Orphanet" id="667662">
    <property type="disease" value="Breast implant-associated anaplastic large cell lymphoma"/>
</dbReference>
<dbReference type="Orphanet" id="512017">
    <property type="disease" value="Chronic lymphoproliferative disorder of natural killer cells"/>
</dbReference>
<dbReference type="Orphanet" id="99885">
    <property type="disease" value="Isolated permanent neonatal diabetes mellitus"/>
</dbReference>
<dbReference type="Orphanet" id="438159">
    <property type="disease" value="STAT3-related early-onset multisystem autoimmune disease"/>
</dbReference>
<dbReference type="Orphanet" id="86872">
    <property type="disease" value="T-cell large granular lymphocyte leukemia"/>
</dbReference>
<dbReference type="PharmGKB" id="PA337"/>
<dbReference type="VEuPathDB" id="HostDB:ENSG00000168610"/>
<dbReference type="eggNOG" id="KOG3667">
    <property type="taxonomic scope" value="Eukaryota"/>
</dbReference>
<dbReference type="GeneTree" id="ENSGT01050000244905"/>
<dbReference type="HOGENOM" id="CLU_014189_3_0_1"/>
<dbReference type="InParanoid" id="P40763"/>
<dbReference type="OrthoDB" id="19300at2759"/>
<dbReference type="PAN-GO" id="P40763">
    <property type="GO annotations" value="9 GO annotations based on evolutionary models"/>
</dbReference>
<dbReference type="PhylomeDB" id="P40763"/>
<dbReference type="TreeFam" id="TF318648"/>
<dbReference type="PathwayCommons" id="P40763"/>
<dbReference type="Reactome" id="R-HSA-1059683">
    <property type="pathway name" value="Interleukin-6 signaling"/>
</dbReference>
<dbReference type="Reactome" id="R-HSA-111453">
    <property type="pathway name" value="BH3-only proteins associate with and inactivate anti-apoptotic BCL-2 members"/>
</dbReference>
<dbReference type="Reactome" id="R-HSA-1266695">
    <property type="pathway name" value="Interleukin-7 signaling"/>
</dbReference>
<dbReference type="Reactome" id="R-HSA-1433557">
    <property type="pathway name" value="Signaling by SCF-KIT"/>
</dbReference>
<dbReference type="Reactome" id="R-HSA-1839117">
    <property type="pathway name" value="Signaling by cytosolic FGFR1 fusion mutants"/>
</dbReference>
<dbReference type="Reactome" id="R-HSA-186763">
    <property type="pathway name" value="Downstream signal transduction"/>
</dbReference>
<dbReference type="Reactome" id="R-HSA-198745">
    <property type="pathway name" value="Signalling to STAT3"/>
</dbReference>
<dbReference type="Reactome" id="R-HSA-201556">
    <property type="pathway name" value="Signaling by ALK"/>
</dbReference>
<dbReference type="Reactome" id="R-HSA-2559582">
    <property type="pathway name" value="Senescence-Associated Secretory Phenotype (SASP)"/>
</dbReference>
<dbReference type="Reactome" id="R-HSA-2586552">
    <property type="pathway name" value="Signaling by Leptin"/>
</dbReference>
<dbReference type="Reactome" id="R-HSA-2892247">
    <property type="pathway name" value="POU5F1 (OCT4), SOX2, NANOG activate genes related to proliferation"/>
</dbReference>
<dbReference type="Reactome" id="R-HSA-390471">
    <property type="pathway name" value="Association of TriC/CCT with target proteins during biosynthesis"/>
</dbReference>
<dbReference type="Reactome" id="R-HSA-452723">
    <property type="pathway name" value="Transcriptional regulation of pluripotent stem cells"/>
</dbReference>
<dbReference type="Reactome" id="R-HSA-6783783">
    <property type="pathway name" value="Interleukin-10 signaling"/>
</dbReference>
<dbReference type="Reactome" id="R-HSA-6785807">
    <property type="pathway name" value="Interleukin-4 and Interleukin-13 signaling"/>
</dbReference>
<dbReference type="Reactome" id="R-HSA-8849474">
    <property type="pathway name" value="PTK6 Activates STAT3"/>
</dbReference>
<dbReference type="Reactome" id="R-HSA-8854691">
    <property type="pathway name" value="Interleukin-20 family signaling"/>
</dbReference>
<dbReference type="Reactome" id="R-HSA-8875791">
    <property type="pathway name" value="MET activates STAT3"/>
</dbReference>
<dbReference type="Reactome" id="R-HSA-8983432">
    <property type="pathway name" value="Interleukin-15 signaling"/>
</dbReference>
<dbReference type="Reactome" id="R-HSA-8984722">
    <property type="pathway name" value="Interleukin-35 Signalling"/>
</dbReference>
<dbReference type="Reactome" id="R-HSA-8985947">
    <property type="pathway name" value="Interleukin-9 signaling"/>
</dbReference>
<dbReference type="Reactome" id="R-HSA-9008059">
    <property type="pathway name" value="Interleukin-37 signaling"/>
</dbReference>
<dbReference type="Reactome" id="R-HSA-9020933">
    <property type="pathway name" value="Interleukin-23 signaling"/>
</dbReference>
<dbReference type="Reactome" id="R-HSA-9020956">
    <property type="pathway name" value="Interleukin-27 signaling"/>
</dbReference>
<dbReference type="Reactome" id="R-HSA-9020958">
    <property type="pathway name" value="Interleukin-21 signaling"/>
</dbReference>
<dbReference type="Reactome" id="R-HSA-9616222">
    <property type="pathway name" value="Transcriptional regulation of granulopoiesis"/>
</dbReference>
<dbReference type="Reactome" id="R-HSA-9670439">
    <property type="pathway name" value="Signaling by phosphorylated juxtamembrane, extracellular and kinase domain KIT mutants"/>
</dbReference>
<dbReference type="Reactome" id="R-HSA-9673767">
    <property type="pathway name" value="Signaling by PDGFRA transmembrane, juxtamembrane and kinase domain mutants"/>
</dbReference>
<dbReference type="Reactome" id="R-HSA-9673770">
    <property type="pathway name" value="Signaling by PDGFRA extracellular domain mutants"/>
</dbReference>
<dbReference type="Reactome" id="R-HSA-9674555">
    <property type="pathway name" value="Signaling by CSF3 (G-CSF)"/>
</dbReference>
<dbReference type="Reactome" id="R-HSA-9680350">
    <property type="pathway name" value="Signaling by CSF1 (M-CSF) in myeloid cells"/>
</dbReference>
<dbReference type="Reactome" id="R-HSA-9701898">
    <property type="pathway name" value="STAT3 nuclear events downstream of ALK signaling"/>
</dbReference>
<dbReference type="Reactome" id="R-HSA-9705462">
    <property type="pathway name" value="Inactivation of CSF3 (G-CSF) signaling"/>
</dbReference>
<dbReference type="Reactome" id="R-HSA-9707564">
    <property type="pathway name" value="Cytoprotection by HMOX1"/>
</dbReference>
<dbReference type="Reactome" id="R-HSA-9725370">
    <property type="pathway name" value="Signaling by ALK fusions and activated point mutants"/>
</dbReference>
<dbReference type="Reactome" id="R-HSA-9725371">
    <property type="pathway name" value="Nuclear events stimulated by ALK signaling in cancer"/>
</dbReference>
<dbReference type="Reactome" id="R-HSA-982772">
    <property type="pathway name" value="Growth hormone receptor signaling"/>
</dbReference>
<dbReference type="Reactome" id="R-HSA-9833482">
    <property type="pathway name" value="PKR-mediated signaling"/>
</dbReference>
<dbReference type="SignaLink" id="P40763"/>
<dbReference type="SIGNOR" id="P40763"/>
<dbReference type="BioGRID-ORCS" id="6774">
    <property type="hits" value="40 hits in 1196 CRISPR screens"/>
</dbReference>
<dbReference type="CD-CODE" id="38EC0B30">
    <property type="entry name" value="Transcriptional condensate"/>
</dbReference>
<dbReference type="CD-CODE" id="804901D1">
    <property type="entry name" value="Nuclear speckle"/>
</dbReference>
<dbReference type="CD-CODE" id="8C2F96ED">
    <property type="entry name" value="Centrosome"/>
</dbReference>
<dbReference type="ChiTaRS" id="STAT3">
    <property type="organism name" value="human"/>
</dbReference>
<dbReference type="EvolutionaryTrace" id="P40763"/>
<dbReference type="GeneWiki" id="STAT3"/>
<dbReference type="GenomeRNAi" id="6774"/>
<dbReference type="Pharos" id="P40763">
    <property type="development level" value="Tchem"/>
</dbReference>
<dbReference type="PRO" id="PR:P40763"/>
<dbReference type="Proteomes" id="UP000005640">
    <property type="component" value="Chromosome 17"/>
</dbReference>
<dbReference type="RNAct" id="P40763">
    <property type="molecule type" value="protein"/>
</dbReference>
<dbReference type="Bgee" id="ENSG00000168610">
    <property type="expression patterns" value="Expressed in type B pancreatic cell and 211 other cell types or tissues"/>
</dbReference>
<dbReference type="ExpressionAtlas" id="P40763">
    <property type="expression patterns" value="baseline and differential"/>
</dbReference>
<dbReference type="GO" id="GO:0000785">
    <property type="term" value="C:chromatin"/>
    <property type="evidence" value="ECO:0000314"/>
    <property type="project" value="BHF-UCL"/>
</dbReference>
<dbReference type="GO" id="GO:0005737">
    <property type="term" value="C:cytoplasm"/>
    <property type="evidence" value="ECO:0000314"/>
    <property type="project" value="UniProtKB"/>
</dbReference>
<dbReference type="GO" id="GO:0005829">
    <property type="term" value="C:cytosol"/>
    <property type="evidence" value="ECO:0000314"/>
    <property type="project" value="HPA"/>
</dbReference>
<dbReference type="GO" id="GO:0098978">
    <property type="term" value="C:glutamatergic synapse"/>
    <property type="evidence" value="ECO:0007669"/>
    <property type="project" value="Ensembl"/>
</dbReference>
<dbReference type="GO" id="GO:0005743">
    <property type="term" value="C:mitochondrial inner membrane"/>
    <property type="evidence" value="ECO:0007669"/>
    <property type="project" value="Ensembl"/>
</dbReference>
<dbReference type="GO" id="GO:0005654">
    <property type="term" value="C:nucleoplasm"/>
    <property type="evidence" value="ECO:0000314"/>
    <property type="project" value="HPA"/>
</dbReference>
<dbReference type="GO" id="GO:0005634">
    <property type="term" value="C:nucleus"/>
    <property type="evidence" value="ECO:0000314"/>
    <property type="project" value="UniProtKB"/>
</dbReference>
<dbReference type="GO" id="GO:0005886">
    <property type="term" value="C:plasma membrane"/>
    <property type="evidence" value="ECO:0000250"/>
    <property type="project" value="UniProtKB"/>
</dbReference>
<dbReference type="GO" id="GO:0014069">
    <property type="term" value="C:postsynaptic density"/>
    <property type="evidence" value="ECO:0007669"/>
    <property type="project" value="Ensembl"/>
</dbReference>
<dbReference type="GO" id="GO:0090575">
    <property type="term" value="C:RNA polymerase II transcription regulator complex"/>
    <property type="evidence" value="ECO:0000315"/>
    <property type="project" value="BHF-UCL"/>
</dbReference>
<dbReference type="GO" id="GO:0098685">
    <property type="term" value="C:Schaffer collateral - CA1 synapse"/>
    <property type="evidence" value="ECO:0007669"/>
    <property type="project" value="Ensembl"/>
</dbReference>
<dbReference type="GO" id="GO:0005667">
    <property type="term" value="C:transcription regulator complex"/>
    <property type="evidence" value="ECO:0000314"/>
    <property type="project" value="ARUK-UCL"/>
</dbReference>
<dbReference type="GO" id="GO:0031730">
    <property type="term" value="F:CCR5 chemokine receptor binding"/>
    <property type="evidence" value="ECO:0007669"/>
    <property type="project" value="Ensembl"/>
</dbReference>
<dbReference type="GO" id="GO:0031490">
    <property type="term" value="F:chromatin DNA binding"/>
    <property type="evidence" value="ECO:0000314"/>
    <property type="project" value="UniProtKB"/>
</dbReference>
<dbReference type="GO" id="GO:0003677">
    <property type="term" value="F:DNA binding"/>
    <property type="evidence" value="ECO:0000250"/>
    <property type="project" value="UniProtKB"/>
</dbReference>
<dbReference type="GO" id="GO:0001228">
    <property type="term" value="F:DNA-binding transcription activator activity, RNA polymerase II-specific"/>
    <property type="evidence" value="ECO:0000314"/>
    <property type="project" value="BHF-UCL"/>
</dbReference>
<dbReference type="GO" id="GO:0003700">
    <property type="term" value="F:DNA-binding transcription factor activity"/>
    <property type="evidence" value="ECO:0000314"/>
    <property type="project" value="UniProtKB"/>
</dbReference>
<dbReference type="GO" id="GO:0000981">
    <property type="term" value="F:DNA-binding transcription factor activity, RNA polymerase II-specific"/>
    <property type="evidence" value="ECO:0000314"/>
    <property type="project" value="UniProtKB"/>
</dbReference>
<dbReference type="GO" id="GO:0140297">
    <property type="term" value="F:DNA-binding transcription factor binding"/>
    <property type="evidence" value="ECO:0000353"/>
    <property type="project" value="UniProtKB"/>
</dbReference>
<dbReference type="GO" id="GO:0042802">
    <property type="term" value="F:identical protein binding"/>
    <property type="evidence" value="ECO:0000353"/>
    <property type="project" value="IntAct"/>
</dbReference>
<dbReference type="GO" id="GO:0106222">
    <property type="term" value="F:lncRNA binding"/>
    <property type="evidence" value="ECO:0000314"/>
    <property type="project" value="FlyBase"/>
</dbReference>
<dbReference type="GO" id="GO:0035259">
    <property type="term" value="F:nuclear glucocorticoid receptor binding"/>
    <property type="evidence" value="ECO:0007669"/>
    <property type="project" value="Ensembl"/>
</dbReference>
<dbReference type="GO" id="GO:0004879">
    <property type="term" value="F:nuclear receptor activity"/>
    <property type="evidence" value="ECO:0000314"/>
    <property type="project" value="BHF-UCL"/>
</dbReference>
<dbReference type="GO" id="GO:0070878">
    <property type="term" value="F:primary miRNA binding"/>
    <property type="evidence" value="ECO:0000353"/>
    <property type="project" value="ARUK-UCL"/>
</dbReference>
<dbReference type="GO" id="GO:0046983">
    <property type="term" value="F:protein dimerization activity"/>
    <property type="evidence" value="ECO:0000250"/>
    <property type="project" value="UniProtKB"/>
</dbReference>
<dbReference type="GO" id="GO:0042803">
    <property type="term" value="F:protein homodimerization activity"/>
    <property type="evidence" value="ECO:0000314"/>
    <property type="project" value="UniProtKB"/>
</dbReference>
<dbReference type="GO" id="GO:0019901">
    <property type="term" value="F:protein kinase binding"/>
    <property type="evidence" value="ECO:0000250"/>
    <property type="project" value="UniProtKB"/>
</dbReference>
<dbReference type="GO" id="GO:0019903">
    <property type="term" value="F:protein phosphatase binding"/>
    <property type="evidence" value="ECO:0000353"/>
    <property type="project" value="UniProtKB"/>
</dbReference>
<dbReference type="GO" id="GO:0140311">
    <property type="term" value="F:protein sequestering activity"/>
    <property type="evidence" value="ECO:0000250"/>
    <property type="project" value="UniProt"/>
</dbReference>
<dbReference type="GO" id="GO:0003723">
    <property type="term" value="F:RNA binding"/>
    <property type="evidence" value="ECO:0000353"/>
    <property type="project" value="ARUK-UCL"/>
</dbReference>
<dbReference type="GO" id="GO:0000978">
    <property type="term" value="F:RNA polymerase II cis-regulatory region sequence-specific DNA binding"/>
    <property type="evidence" value="ECO:0000314"/>
    <property type="project" value="BHF-UCL"/>
</dbReference>
<dbReference type="GO" id="GO:0061629">
    <property type="term" value="F:RNA polymerase II-specific DNA-binding transcription factor binding"/>
    <property type="evidence" value="ECO:0000353"/>
    <property type="project" value="BHF-UCL"/>
</dbReference>
<dbReference type="GO" id="GO:0140610">
    <property type="term" value="F:RNA sequestering activity"/>
    <property type="evidence" value="ECO:0000314"/>
    <property type="project" value="ARUK-UCL"/>
</dbReference>
<dbReference type="GO" id="GO:0035591">
    <property type="term" value="F:signaling adaptor activity"/>
    <property type="evidence" value="ECO:0000353"/>
    <property type="project" value="ARUK-UCL"/>
</dbReference>
<dbReference type="GO" id="GO:0005102">
    <property type="term" value="F:signaling receptor binding"/>
    <property type="evidence" value="ECO:0000353"/>
    <property type="project" value="ARUK-UCL"/>
</dbReference>
<dbReference type="GO" id="GO:0000976">
    <property type="term" value="F:transcription cis-regulatory region binding"/>
    <property type="evidence" value="ECO:0000314"/>
    <property type="project" value="BHF-UCL"/>
</dbReference>
<dbReference type="GO" id="GO:0006953">
    <property type="term" value="P:acute-phase response"/>
    <property type="evidence" value="ECO:0007669"/>
    <property type="project" value="Ensembl"/>
</dbReference>
<dbReference type="GO" id="GO:0048708">
    <property type="term" value="P:astrocyte differentiation"/>
    <property type="evidence" value="ECO:0000250"/>
    <property type="project" value="UniProtKB"/>
</dbReference>
<dbReference type="GO" id="GO:0030154">
    <property type="term" value="P:cell differentiation"/>
    <property type="evidence" value="ECO:0000314"/>
    <property type="project" value="UniProt"/>
</dbReference>
<dbReference type="GO" id="GO:0008283">
    <property type="term" value="P:cell population proliferation"/>
    <property type="evidence" value="ECO:0007669"/>
    <property type="project" value="Ensembl"/>
</dbReference>
<dbReference type="GO" id="GO:0007259">
    <property type="term" value="P:cell surface receptor signaling pathway via JAK-STAT"/>
    <property type="evidence" value="ECO:0000314"/>
    <property type="project" value="UniProt"/>
</dbReference>
<dbReference type="GO" id="GO:0097696">
    <property type="term" value="P:cell surface receptor signaling pathway via STAT"/>
    <property type="evidence" value="ECO:0000315"/>
    <property type="project" value="BHF-UCL"/>
</dbReference>
<dbReference type="GO" id="GO:0032870">
    <property type="term" value="P:cellular response to hormone stimulus"/>
    <property type="evidence" value="ECO:0000314"/>
    <property type="project" value="BHF-UCL"/>
</dbReference>
<dbReference type="GO" id="GO:0097398">
    <property type="term" value="P:cellular response to interleukin-17"/>
    <property type="evidence" value="ECO:0007669"/>
    <property type="project" value="Ensembl"/>
</dbReference>
<dbReference type="GO" id="GO:0044320">
    <property type="term" value="P:cellular response to leptin stimulus"/>
    <property type="evidence" value="ECO:0000314"/>
    <property type="project" value="UniProtKB"/>
</dbReference>
<dbReference type="GO" id="GO:0019221">
    <property type="term" value="P:cytokine-mediated signaling pathway"/>
    <property type="evidence" value="ECO:0000303"/>
    <property type="project" value="UniProtKB"/>
</dbReference>
<dbReference type="GO" id="GO:0006952">
    <property type="term" value="P:defense response"/>
    <property type="evidence" value="ECO:0000318"/>
    <property type="project" value="GO_Central"/>
</dbReference>
<dbReference type="GO" id="GO:0042755">
    <property type="term" value="P:eating behavior"/>
    <property type="evidence" value="ECO:0000250"/>
    <property type="project" value="UniProtKB"/>
</dbReference>
<dbReference type="GO" id="GO:0097009">
    <property type="term" value="P:energy homeostasis"/>
    <property type="evidence" value="ECO:0000250"/>
    <property type="project" value="UniProtKB"/>
</dbReference>
<dbReference type="GO" id="GO:0001754">
    <property type="term" value="P:eye photoreceptor cell differentiation"/>
    <property type="evidence" value="ECO:0000250"/>
    <property type="project" value="UniProtKB"/>
</dbReference>
<dbReference type="GO" id="GO:0042593">
    <property type="term" value="P:glucose homeostasis"/>
    <property type="evidence" value="ECO:0000250"/>
    <property type="project" value="UniProtKB"/>
</dbReference>
<dbReference type="GO" id="GO:0060396">
    <property type="term" value="P:growth hormone receptor signaling pathway"/>
    <property type="evidence" value="ECO:0000314"/>
    <property type="project" value="BHF-UCL"/>
</dbReference>
<dbReference type="GO" id="GO:0060397">
    <property type="term" value="P:growth hormone receptor signaling pathway via JAK-STAT"/>
    <property type="evidence" value="ECO:0000314"/>
    <property type="project" value="BHF-UCL"/>
</dbReference>
<dbReference type="GO" id="GO:0006954">
    <property type="term" value="P:inflammatory response"/>
    <property type="evidence" value="ECO:0000250"/>
    <property type="project" value="UniProtKB"/>
</dbReference>
<dbReference type="GO" id="GO:0140105">
    <property type="term" value="P:interleukin-10-mediated signaling pathway"/>
    <property type="evidence" value="ECO:0000314"/>
    <property type="project" value="UniProt"/>
</dbReference>
<dbReference type="GO" id="GO:0038154">
    <property type="term" value="P:interleukin-11-mediated signaling pathway"/>
    <property type="evidence" value="ECO:0000314"/>
    <property type="project" value="UniProt"/>
</dbReference>
<dbReference type="GO" id="GO:0035723">
    <property type="term" value="P:interleukin-15-mediated signaling pathway"/>
    <property type="evidence" value="ECO:0000314"/>
    <property type="project" value="UniProt"/>
</dbReference>
<dbReference type="GO" id="GO:0038110">
    <property type="term" value="P:interleukin-2-mediated signaling pathway"/>
    <property type="evidence" value="ECO:0000314"/>
    <property type="project" value="UniProt"/>
</dbReference>
<dbReference type="GO" id="GO:0038155">
    <property type="term" value="P:interleukin-23-mediated signaling pathway"/>
    <property type="evidence" value="ECO:0000314"/>
    <property type="project" value="UniProt"/>
</dbReference>
<dbReference type="GO" id="GO:0070102">
    <property type="term" value="P:interleukin-6-mediated signaling pathway"/>
    <property type="evidence" value="ECO:0000314"/>
    <property type="project" value="UniProtKB"/>
</dbReference>
<dbReference type="GO" id="GO:0038113">
    <property type="term" value="P:interleukin-9-mediated signaling pathway"/>
    <property type="evidence" value="ECO:0000314"/>
    <property type="project" value="UniProt"/>
</dbReference>
<dbReference type="GO" id="GO:0030522">
    <property type="term" value="P:intracellular receptor signaling pathway"/>
    <property type="evidence" value="ECO:0000314"/>
    <property type="project" value="BHF-UCL"/>
</dbReference>
<dbReference type="GO" id="GO:0033210">
    <property type="term" value="P:leptin-mediated signaling pathway"/>
    <property type="evidence" value="ECO:0000314"/>
    <property type="project" value="UniProtKB"/>
</dbReference>
<dbReference type="GO" id="GO:0050804">
    <property type="term" value="P:modulation of chemical synaptic transmission"/>
    <property type="evidence" value="ECO:0007669"/>
    <property type="project" value="Ensembl"/>
</dbReference>
<dbReference type="GO" id="GO:0042789">
    <property type="term" value="P:mRNA transcription by RNA polymerase II"/>
    <property type="evidence" value="ECO:0007669"/>
    <property type="project" value="Ensembl"/>
</dbReference>
<dbReference type="GO" id="GO:0010507">
    <property type="term" value="P:negative regulation of autophagy"/>
    <property type="evidence" value="ECO:0000314"/>
    <property type="project" value="UniProtKB"/>
</dbReference>
<dbReference type="GO" id="GO:0043124">
    <property type="term" value="P:negative regulation of canonical NF-kappaB signal transduction"/>
    <property type="evidence" value="ECO:0000250"/>
    <property type="project" value="UniProt"/>
</dbReference>
<dbReference type="GO" id="GO:0008285">
    <property type="term" value="P:negative regulation of cell population proliferation"/>
    <property type="evidence" value="ECO:0007669"/>
    <property type="project" value="Ensembl"/>
</dbReference>
<dbReference type="GO" id="GO:1900016">
    <property type="term" value="P:negative regulation of cytokine production involved in inflammatory response"/>
    <property type="evidence" value="ECO:0000250"/>
    <property type="project" value="UniProt"/>
</dbReference>
<dbReference type="GO" id="GO:0010629">
    <property type="term" value="P:negative regulation of gene expression"/>
    <property type="evidence" value="ECO:0000314"/>
    <property type="project" value="BHF-UCL"/>
</dbReference>
<dbReference type="GO" id="GO:0045820">
    <property type="term" value="P:negative regulation of glycolytic process"/>
    <property type="evidence" value="ECO:0007669"/>
    <property type="project" value="Ensembl"/>
</dbReference>
<dbReference type="GO" id="GO:0010730">
    <property type="term" value="P:negative regulation of hydrogen peroxide biosynthetic process"/>
    <property type="evidence" value="ECO:0007669"/>
    <property type="project" value="Ensembl"/>
</dbReference>
<dbReference type="GO" id="GO:0050728">
    <property type="term" value="P:negative regulation of inflammatory response"/>
    <property type="evidence" value="ECO:0000250"/>
    <property type="project" value="UniProt"/>
</dbReference>
<dbReference type="GO" id="GO:0106015">
    <property type="term" value="P:negative regulation of inflammatory response to wounding"/>
    <property type="evidence" value="ECO:0000314"/>
    <property type="project" value="UniProt"/>
</dbReference>
<dbReference type="GO" id="GO:2001223">
    <property type="term" value="P:negative regulation of neuron migration"/>
    <property type="evidence" value="ECO:0007669"/>
    <property type="project" value="Ensembl"/>
</dbReference>
<dbReference type="GO" id="GO:2000635">
    <property type="term" value="P:negative regulation of primary miRNA processing"/>
    <property type="evidence" value="ECO:0000315"/>
    <property type="project" value="ARUK-UCL"/>
</dbReference>
<dbReference type="GO" id="GO:2000737">
    <property type="term" value="P:negative regulation of stem cell differentiation"/>
    <property type="evidence" value="ECO:0007669"/>
    <property type="project" value="Ensembl"/>
</dbReference>
<dbReference type="GO" id="GO:0000122">
    <property type="term" value="P:negative regulation of transcription by RNA polymerase II"/>
    <property type="evidence" value="ECO:0000304"/>
    <property type="project" value="ProtInc"/>
</dbReference>
<dbReference type="GO" id="GO:0007399">
    <property type="term" value="P:nervous system development"/>
    <property type="evidence" value="ECO:0000304"/>
    <property type="project" value="ProtInc"/>
</dbReference>
<dbReference type="GO" id="GO:0043491">
    <property type="term" value="P:phosphatidylinositol 3-kinase/protein kinase B signal transduction"/>
    <property type="evidence" value="ECO:0000314"/>
    <property type="project" value="UniProt"/>
</dbReference>
<dbReference type="GO" id="GO:0016310">
    <property type="term" value="P:phosphorylation"/>
    <property type="evidence" value="ECO:0000250"/>
    <property type="project" value="UniProtKB"/>
</dbReference>
<dbReference type="GO" id="GO:0045766">
    <property type="term" value="P:positive regulation of angiogenesis"/>
    <property type="evidence" value="ECO:0007669"/>
    <property type="project" value="Ensembl"/>
</dbReference>
<dbReference type="GO" id="GO:2001171">
    <property type="term" value="P:positive regulation of ATP biosynthetic process"/>
    <property type="evidence" value="ECO:0007669"/>
    <property type="project" value="Ensembl"/>
</dbReference>
<dbReference type="GO" id="GO:0043123">
    <property type="term" value="P:positive regulation of canonical NF-kappaB signal transduction"/>
    <property type="evidence" value="ECO:0000250"/>
    <property type="project" value="ARUK-UCL"/>
</dbReference>
<dbReference type="GO" id="GO:0030335">
    <property type="term" value="P:positive regulation of cell migration"/>
    <property type="evidence" value="ECO:0000315"/>
    <property type="project" value="ARUK-UCL"/>
</dbReference>
<dbReference type="GO" id="GO:1900017">
    <property type="term" value="P:positive regulation of cytokine production involved in inflammatory response"/>
    <property type="evidence" value="ECO:0000316"/>
    <property type="project" value="ARUK-UCL"/>
</dbReference>
<dbReference type="GO" id="GO:0045893">
    <property type="term" value="P:positive regulation of DNA-templated transcription"/>
    <property type="evidence" value="ECO:0000314"/>
    <property type="project" value="BHF-UCL"/>
</dbReference>
<dbReference type="GO" id="GO:0045648">
    <property type="term" value="P:positive regulation of erythrocyte differentiation"/>
    <property type="evidence" value="ECO:0000315"/>
    <property type="project" value="UniProtKB"/>
</dbReference>
<dbReference type="GO" id="GO:0090091">
    <property type="term" value="P:positive regulation of extracellular matrix disassembly"/>
    <property type="evidence" value="ECO:0000316"/>
    <property type="project" value="BHF-UCL"/>
</dbReference>
<dbReference type="GO" id="GO:0010628">
    <property type="term" value="P:positive regulation of gene expression"/>
    <property type="evidence" value="ECO:0000314"/>
    <property type="project" value="BHF-UCL"/>
</dbReference>
<dbReference type="GO" id="GO:1902728">
    <property type="term" value="P:positive regulation of growth factor dependent skeletal muscle satellite cell proliferation"/>
    <property type="evidence" value="ECO:0007669"/>
    <property type="project" value="Ensembl"/>
</dbReference>
<dbReference type="GO" id="GO:0032731">
    <property type="term" value="P:positive regulation of interleukin-1 beta production"/>
    <property type="evidence" value="ECO:0000316"/>
    <property type="project" value="ARUK-UCL"/>
</dbReference>
<dbReference type="GO" id="GO:0032733">
    <property type="term" value="P:positive regulation of interleukin-10 production"/>
    <property type="evidence" value="ECO:0000316"/>
    <property type="project" value="ARUK-UCL"/>
</dbReference>
<dbReference type="GO" id="GO:0032755">
    <property type="term" value="P:positive regulation of interleukin-6 production"/>
    <property type="evidence" value="ECO:0000250"/>
    <property type="project" value="ARUK-UCL"/>
</dbReference>
<dbReference type="GO" id="GO:0032757">
    <property type="term" value="P:positive regulation of interleukin-8 production"/>
    <property type="evidence" value="ECO:0000316"/>
    <property type="project" value="ARUK-UCL"/>
</dbReference>
<dbReference type="GO" id="GO:1902895">
    <property type="term" value="P:positive regulation of miRNA transcription"/>
    <property type="evidence" value="ECO:0000314"/>
    <property type="project" value="BHF-UCL"/>
</dbReference>
<dbReference type="GO" id="GO:0045747">
    <property type="term" value="P:positive regulation of Notch signaling pathway"/>
    <property type="evidence" value="ECO:0000250"/>
    <property type="project" value="UniProtKB"/>
</dbReference>
<dbReference type="GO" id="GO:0050766">
    <property type="term" value="P:positive regulation of phagocytosis"/>
    <property type="evidence" value="ECO:0000314"/>
    <property type="project" value="UniProt"/>
</dbReference>
<dbReference type="GO" id="GO:0045944">
    <property type="term" value="P:positive regulation of transcription by RNA polymerase II"/>
    <property type="evidence" value="ECO:0000314"/>
    <property type="project" value="BHF-UCL"/>
</dbReference>
<dbReference type="GO" id="GO:0032760">
    <property type="term" value="P:positive regulation of tumor necrosis factor production"/>
    <property type="evidence" value="ECO:0000316"/>
    <property type="project" value="ARUK-UCL"/>
</dbReference>
<dbReference type="GO" id="GO:1905564">
    <property type="term" value="P:positive regulation of vascular endothelial cell proliferation"/>
    <property type="evidence" value="ECO:0007669"/>
    <property type="project" value="Ensembl"/>
</dbReference>
<dbReference type="GO" id="GO:0010575">
    <property type="term" value="P:positive regulation of vascular endothelial growth factor production"/>
    <property type="evidence" value="ECO:0000315"/>
    <property type="project" value="BHF-UCL"/>
</dbReference>
<dbReference type="GO" id="GO:0099527">
    <property type="term" value="P:postsynapse to nucleus signaling pathway"/>
    <property type="evidence" value="ECO:0007669"/>
    <property type="project" value="Ensembl"/>
</dbReference>
<dbReference type="GO" id="GO:0006606">
    <property type="term" value="P:protein import into nucleus"/>
    <property type="evidence" value="ECO:0000314"/>
    <property type="project" value="UniProtKB"/>
</dbReference>
<dbReference type="GO" id="GO:0060019">
    <property type="term" value="P:radial glial cell differentiation"/>
    <property type="evidence" value="ECO:0000250"/>
    <property type="project" value="UniProtKB"/>
</dbReference>
<dbReference type="GO" id="GO:0051726">
    <property type="term" value="P:regulation of cell cycle"/>
    <property type="evidence" value="ECO:0000314"/>
    <property type="project" value="UniProtKB"/>
</dbReference>
<dbReference type="GO" id="GO:0042127">
    <property type="term" value="P:regulation of cell population proliferation"/>
    <property type="evidence" value="ECO:0000318"/>
    <property type="project" value="GO_Central"/>
</dbReference>
<dbReference type="GO" id="GO:1900037">
    <property type="term" value="P:regulation of cellular response to hypoxia"/>
    <property type="evidence" value="ECO:0007669"/>
    <property type="project" value="Ensembl"/>
</dbReference>
<dbReference type="GO" id="GO:0006355">
    <property type="term" value="P:regulation of DNA-templated transcription"/>
    <property type="evidence" value="ECO:0000314"/>
    <property type="project" value="UniProtKB"/>
</dbReference>
<dbReference type="GO" id="GO:0060259">
    <property type="term" value="P:regulation of feeding behavior"/>
    <property type="evidence" value="ECO:0000250"/>
    <property type="project" value="UniProtKB"/>
</dbReference>
<dbReference type="GO" id="GO:0046902">
    <property type="term" value="P:regulation of mitochondrial membrane permeability"/>
    <property type="evidence" value="ECO:0007669"/>
    <property type="project" value="Ensembl"/>
</dbReference>
<dbReference type="GO" id="GO:0040014">
    <property type="term" value="P:regulation of multicellular organism growth"/>
    <property type="evidence" value="ECO:0007669"/>
    <property type="project" value="Ensembl"/>
</dbReference>
<dbReference type="GO" id="GO:0006357">
    <property type="term" value="P:regulation of transcription by RNA polymerase II"/>
    <property type="evidence" value="ECO:0000250"/>
    <property type="project" value="UniProtKB"/>
</dbReference>
<dbReference type="GO" id="GO:0032355">
    <property type="term" value="P:response to estradiol"/>
    <property type="evidence" value="ECO:0000314"/>
    <property type="project" value="BHF-UCL"/>
</dbReference>
<dbReference type="GO" id="GO:0045471">
    <property type="term" value="P:response to ethanol"/>
    <property type="evidence" value="ECO:0007669"/>
    <property type="project" value="Ensembl"/>
</dbReference>
<dbReference type="GO" id="GO:0001666">
    <property type="term" value="P:response to hypoxia"/>
    <property type="evidence" value="ECO:0007669"/>
    <property type="project" value="Ensembl"/>
</dbReference>
<dbReference type="GO" id="GO:0002931">
    <property type="term" value="P:response to ischemia"/>
    <property type="evidence" value="ECO:0007669"/>
    <property type="project" value="Ensembl"/>
</dbReference>
<dbReference type="GO" id="GO:0044321">
    <property type="term" value="P:response to leptin"/>
    <property type="evidence" value="ECO:0000314"/>
    <property type="project" value="UniProtKB"/>
</dbReference>
<dbReference type="GO" id="GO:0043434">
    <property type="term" value="P:response to peptide hormone"/>
    <property type="evidence" value="ECO:0000318"/>
    <property type="project" value="GO_Central"/>
</dbReference>
<dbReference type="GO" id="GO:0009410">
    <property type="term" value="P:response to xenobiotic stimulus"/>
    <property type="evidence" value="ECO:0007669"/>
    <property type="project" value="Ensembl"/>
</dbReference>
<dbReference type="GO" id="GO:0060221">
    <property type="term" value="P:retinal rod cell differentiation"/>
    <property type="evidence" value="ECO:0007669"/>
    <property type="project" value="Ensembl"/>
</dbReference>
<dbReference type="GO" id="GO:0019953">
    <property type="term" value="P:sexual reproduction"/>
    <property type="evidence" value="ECO:0000250"/>
    <property type="project" value="UniProtKB"/>
</dbReference>
<dbReference type="GO" id="GO:0007165">
    <property type="term" value="P:signal transduction"/>
    <property type="evidence" value="ECO:0000304"/>
    <property type="project" value="ProtInc"/>
</dbReference>
<dbReference type="GO" id="GO:0035019">
    <property type="term" value="P:somatic stem cell population maintenance"/>
    <property type="evidence" value="ECO:0007669"/>
    <property type="project" value="Ensembl"/>
</dbReference>
<dbReference type="GO" id="GO:0072540">
    <property type="term" value="P:T-helper 17 cell lineage commitment"/>
    <property type="evidence" value="ECO:0000250"/>
    <property type="project" value="UniProtKB"/>
</dbReference>
<dbReference type="GO" id="GO:0072538">
    <property type="term" value="P:T-helper 17 type immune response"/>
    <property type="evidence" value="ECO:0000314"/>
    <property type="project" value="UniProtKB"/>
</dbReference>
<dbReference type="GO" id="GO:0001659">
    <property type="term" value="P:temperature homeostasis"/>
    <property type="evidence" value="ECO:0000250"/>
    <property type="project" value="UniProtKB"/>
</dbReference>
<dbReference type="GO" id="GO:0007179">
    <property type="term" value="P:transforming growth factor beta receptor signaling pathway"/>
    <property type="evidence" value="ECO:0000316"/>
    <property type="project" value="ARUK-UCL"/>
</dbReference>
<dbReference type="CDD" id="cd10374">
    <property type="entry name" value="SH2_STAT3"/>
    <property type="match status" value="1"/>
</dbReference>
<dbReference type="CDD" id="cd16853">
    <property type="entry name" value="STAT3_CCD"/>
    <property type="match status" value="1"/>
</dbReference>
<dbReference type="CDD" id="cd16847">
    <property type="entry name" value="STAT3_DBD"/>
    <property type="match status" value="1"/>
</dbReference>
<dbReference type="FunFam" id="1.10.238.10:FF:000012">
    <property type="entry name" value="Signal transducer and activator of transcription"/>
    <property type="match status" value="1"/>
</dbReference>
<dbReference type="FunFam" id="1.10.532.10:FF:000001">
    <property type="entry name" value="Signal transducer and activator of transcription"/>
    <property type="match status" value="1"/>
</dbReference>
<dbReference type="FunFam" id="1.20.1050.20:FF:000003">
    <property type="entry name" value="Signal transducer and activator of transcription"/>
    <property type="match status" value="1"/>
</dbReference>
<dbReference type="FunFam" id="3.30.505.10:FF:000003">
    <property type="entry name" value="Signal transducer and activator of transcription"/>
    <property type="match status" value="1"/>
</dbReference>
<dbReference type="FunFam" id="2.60.40.630:FF:000012">
    <property type="entry name" value="Signal transducer and activator of transcription 3"/>
    <property type="match status" value="1"/>
</dbReference>
<dbReference type="Gene3D" id="1.10.238.10">
    <property type="entry name" value="EF-hand"/>
    <property type="match status" value="1"/>
</dbReference>
<dbReference type="Gene3D" id="3.30.505.10">
    <property type="entry name" value="SH2 domain"/>
    <property type="match status" value="1"/>
</dbReference>
<dbReference type="Gene3D" id="1.20.1050.20">
    <property type="entry name" value="STAT transcription factor, all-alpha domain"/>
    <property type="match status" value="1"/>
</dbReference>
<dbReference type="Gene3D" id="2.60.40.630">
    <property type="entry name" value="STAT transcription factor, DNA-binding domain"/>
    <property type="match status" value="1"/>
</dbReference>
<dbReference type="Gene3D" id="1.10.532.10">
    <property type="entry name" value="STAT transcription factor, N-terminal domain"/>
    <property type="match status" value="1"/>
</dbReference>
<dbReference type="InterPro" id="IPR008967">
    <property type="entry name" value="p53-like_TF_DNA-bd_sf"/>
</dbReference>
<dbReference type="InterPro" id="IPR000980">
    <property type="entry name" value="SH2"/>
</dbReference>
<dbReference type="InterPro" id="IPR036860">
    <property type="entry name" value="SH2_dom_sf"/>
</dbReference>
<dbReference type="InterPro" id="IPR001217">
    <property type="entry name" value="STAT"/>
</dbReference>
<dbReference type="InterPro" id="IPR035855">
    <property type="entry name" value="STAT3_SH2"/>
</dbReference>
<dbReference type="InterPro" id="IPR048988">
    <property type="entry name" value="STAT_linker"/>
</dbReference>
<dbReference type="InterPro" id="IPR036535">
    <property type="entry name" value="STAT_N_sf"/>
</dbReference>
<dbReference type="InterPro" id="IPR013800">
    <property type="entry name" value="STAT_TF_alpha"/>
</dbReference>
<dbReference type="InterPro" id="IPR015988">
    <property type="entry name" value="STAT_TF_coiled-coil"/>
</dbReference>
<dbReference type="InterPro" id="IPR013801">
    <property type="entry name" value="STAT_TF_DNA-bd"/>
</dbReference>
<dbReference type="InterPro" id="IPR012345">
    <property type="entry name" value="STAT_TF_DNA-bd_N"/>
</dbReference>
<dbReference type="InterPro" id="IPR013799">
    <property type="entry name" value="STAT_TF_prot_interaction"/>
</dbReference>
<dbReference type="PANTHER" id="PTHR11801">
    <property type="entry name" value="SIGNAL TRANSDUCER AND ACTIVATOR OF TRANSCRIPTION"/>
    <property type="match status" value="1"/>
</dbReference>
<dbReference type="Pfam" id="PF00017">
    <property type="entry name" value="SH2"/>
    <property type="match status" value="1"/>
</dbReference>
<dbReference type="Pfam" id="PF01017">
    <property type="entry name" value="STAT_alpha"/>
    <property type="match status" value="1"/>
</dbReference>
<dbReference type="Pfam" id="PF02864">
    <property type="entry name" value="STAT_bind"/>
    <property type="match status" value="1"/>
</dbReference>
<dbReference type="Pfam" id="PF02865">
    <property type="entry name" value="STAT_int"/>
    <property type="match status" value="1"/>
</dbReference>
<dbReference type="Pfam" id="PF21354">
    <property type="entry name" value="STAT_linker"/>
    <property type="match status" value="1"/>
</dbReference>
<dbReference type="SMART" id="SM00964">
    <property type="entry name" value="STAT_int"/>
    <property type="match status" value="1"/>
</dbReference>
<dbReference type="SUPFAM" id="SSF49417">
    <property type="entry name" value="p53-like transcription factors"/>
    <property type="match status" value="1"/>
</dbReference>
<dbReference type="SUPFAM" id="SSF55550">
    <property type="entry name" value="SH2 domain"/>
    <property type="match status" value="1"/>
</dbReference>
<dbReference type="SUPFAM" id="SSF47655">
    <property type="entry name" value="STAT"/>
    <property type="match status" value="1"/>
</dbReference>
<dbReference type="SUPFAM" id="SSF48092">
    <property type="entry name" value="Transcription factor STAT-4 N-domain"/>
    <property type="match status" value="1"/>
</dbReference>
<dbReference type="PROSITE" id="PS50001">
    <property type="entry name" value="SH2"/>
    <property type="match status" value="1"/>
</dbReference>
<feature type="initiator methionine" description="Removed" evidence="72">
    <location>
        <position position="1"/>
    </location>
</feature>
<feature type="chain" id="PRO_0000182417" description="Signal transducer and activator of transcription 3">
    <location>
        <begin position="2"/>
        <end position="770"/>
    </location>
</feature>
<feature type="domain" description="SH2" evidence="3">
    <location>
        <begin position="580"/>
        <end position="670"/>
    </location>
</feature>
<feature type="short sequence motif" description="Essential for nuclear import">
    <location>
        <begin position="150"/>
        <end position="162"/>
    </location>
</feature>
<feature type="modified residue" description="N-acetylalanine" evidence="72">
    <location>
        <position position="2"/>
    </location>
</feature>
<feature type="modified residue" description="N6-acetyllysine" evidence="18 29">
    <location>
        <position position="49"/>
    </location>
</feature>
<feature type="modified residue" description="N6-acetyllysine" evidence="18 29 45">
    <location>
        <position position="87"/>
    </location>
</feature>
<feature type="modified residue" description="Allysine; alternate" evidence="42">
    <location>
        <position position="601"/>
    </location>
</feature>
<feature type="modified residue" description="N6-acetyllysine; alternate" evidence="42">
    <location>
        <position position="601"/>
    </location>
</feature>
<feature type="modified residue" description="Allysine; alternate" evidence="42">
    <location>
        <position position="615"/>
    </location>
</feature>
<feature type="modified residue" description="N6-acetyllysine; alternate" evidence="42">
    <location>
        <position position="615"/>
    </location>
</feature>
<feature type="modified residue" description="Allysine; alternate" evidence="42">
    <location>
        <position position="631"/>
    </location>
</feature>
<feature type="modified residue" description="N6-acetyllysine; alternate" evidence="42">
    <location>
        <position position="631"/>
    </location>
</feature>
<feature type="modified residue" description="Phosphotyrosine; by TYK2" evidence="47">
    <location>
        <position position="640"/>
    </location>
</feature>
<feature type="modified residue" description="Allysine; alternate" evidence="42">
    <location>
        <position position="685"/>
    </location>
</feature>
<feature type="modified residue" description="N6-acetyllysine; alternate" evidence="14 42">
    <location>
        <position position="685"/>
    </location>
</feature>
<feature type="modified residue" description="Phosphotyrosine; by FER and PTK6" evidence="9 19 32 33 39 50 52 68 74">
    <location>
        <position position="705"/>
    </location>
</feature>
<feature type="modified residue" description="N6-acetyllysine" evidence="42">
    <location>
        <position position="707"/>
    </location>
</feature>
<feature type="modified residue" description="Phosphothreonine" evidence="74">
    <location>
        <position position="714"/>
    </location>
</feature>
<feature type="modified residue" description="Phosphoserine; by DYRK2, NLK, NEK6, IRAK1, RPS6KA5, ZIPK/DAPK3 and PKC/PRKCE" evidence="9 12 17 22 28 32 39 50 51 69 70 71 73 74">
    <location>
        <position position="727"/>
    </location>
</feature>
<feature type="splice variant" id="VSP_010474" description="In isoform Del-701." evidence="59">
    <location>
        <position position="701"/>
    </location>
</feature>
<feature type="splice variant" id="VSP_055918" description="In isoform 3." evidence="62">
    <original>TTCSNTI</original>
    <variation>FIDAVWK</variation>
    <location>
        <begin position="716"/>
        <end position="722"/>
    </location>
</feature>
<feature type="splice variant" id="VSP_055919" description="In isoform 3." evidence="62">
    <location>
        <begin position="723"/>
        <end position="770"/>
    </location>
</feature>
<feature type="sequence variant" id="VAR_018683" description="In dbSNP:rs1803125.">
    <original>Q</original>
    <variation>K</variation>
    <location>
        <position position="32"/>
    </location>
</feature>
<feature type="sequence variant" id="VAR_089785" description="In ADMIO1; uncertain significance." evidence="53">
    <original>R</original>
    <variation>H</variation>
    <location>
        <position position="70"/>
    </location>
</feature>
<feature type="sequence variant" id="VAR_089786" description="In ADMIO1; uncertain significance." evidence="53">
    <original>R</original>
    <variation>W</variation>
    <location>
        <position position="103"/>
    </location>
</feature>
<feature type="sequence variant" id="VAR_089787" description="In ADMIO1; uncertain significance." evidence="53">
    <original>R</original>
    <variation>W</variation>
    <location>
        <position position="107"/>
    </location>
</feature>
<feature type="sequence variant" id="VAR_018679" description="In dbSNP:rs17878478." evidence="58">
    <original>M</original>
    <variation>I</variation>
    <location>
        <position position="143"/>
    </location>
</feature>
<feature type="sequence variant" id="VAR_089788" description="In ADMIO1; likely pathogenic; results in increased transcriptional activation." evidence="37 53">
    <original>R</original>
    <variation>W</variation>
    <location>
        <position position="152"/>
    </location>
</feature>
<feature type="sequence variant" id="VAR_089789" description="In ADMIO1; uncertain significance." evidence="53">
    <original>M</original>
    <variation>R</variation>
    <location>
        <position position="162"/>
    </location>
</feature>
<feature type="sequence variant" id="VAR_089790" description="In ADMIO1; uncertain significance." evidence="53">
    <original>E</original>
    <variation>D</variation>
    <location>
        <position position="166"/>
    </location>
</feature>
<feature type="sequence variant" id="VAR_089791" description="In ADMIO1; uncertain significance." evidence="53">
    <original>E</original>
    <variation>K</variation>
    <location>
        <position position="166"/>
    </location>
</feature>
<feature type="sequence variant" id="VAR_089792" description="In ADMIO1; uncertain significance." evidence="53">
    <original>F</original>
    <variation>S</variation>
    <location>
        <position position="174"/>
    </location>
</feature>
<feature type="sequence variant" id="VAR_089793" description="In ADMIO1; uncertain significance." evidence="53">
    <original>V</original>
    <variation>A</variation>
    <location>
        <position position="218"/>
    </location>
</feature>
<feature type="sequence variant" id="VAR_089794" description="In ADMIO1; uncertain significance." evidence="53">
    <original>L</original>
    <variation>P</variation>
    <location>
        <position position="260"/>
    </location>
</feature>
<feature type="sequence variant" id="VAR_089795" description="In ADMIO1; likely pathogenic." evidence="53">
    <original>R</original>
    <variation>C</variation>
    <location>
        <position position="278"/>
    </location>
</feature>
<feature type="sequence variant" id="VAR_089796" description="In ADMIO1; likely pathogenic; results in increased transcriptional activation." evidence="46 53">
    <original>R</original>
    <variation>H</variation>
    <location>
        <position position="278"/>
    </location>
</feature>
<feature type="sequence variant" id="VAR_089797" description="In ADMIO1; uncertain significance." evidence="53">
    <original>R</original>
    <variation>Q</variation>
    <location>
        <position position="302"/>
    </location>
</feature>
<feature type="sequence variant" id="VAR_089798" description="In ADMIO1; uncertain significance." evidence="53">
    <original>R</original>
    <variation>W</variation>
    <location>
        <position position="325"/>
    </location>
</feature>
<feature type="sequence variant" id="VAR_078445" description="In ADMIO1; increases transcriptional activity; increases binding to ISL1 promoter region; decreases glucose stimulated insulin secretion." evidence="43">
    <original>P</original>
    <variation>S</variation>
    <location>
        <position position="330"/>
    </location>
</feature>
<feature type="sequence variant" id="VAR_089799" description="In ADMIO1; uncertain significance." evidence="53">
    <original>M</original>
    <variation>R</variation>
    <location>
        <position position="331"/>
    </location>
</feature>
<feature type="sequence variant" id="VAR_089800" description="In ADMIO1; likely pathogenic; results in increased transcriptional activation." evidence="37 53">
    <original>Q</original>
    <variation>H</variation>
    <location>
        <position position="344"/>
    </location>
</feature>
<feature type="sequence variant" id="VAR_089801" description="In ADMIO1; likely pathogenic." evidence="37 53">
    <original>V</original>
    <variation>F</variation>
    <location>
        <position position="353"/>
    </location>
</feature>
<feature type="sequence variant" id="VAR_089802" description="In ADMIO1; likely pathogenic; results in increased transcriptional activation; increased phosphorylation." evidence="54">
    <original>E</original>
    <variation>K</variation>
    <location>
        <position position="357"/>
    </location>
</feature>
<feature type="sequence variant" id="VAR_089803" description="In ADMIO1; uncertain significance." evidence="53">
    <original>Q</original>
    <variation>R</variation>
    <location>
        <position position="361"/>
    </location>
</feature>
<feature type="sequence variant" id="VAR_037365" description="In HIES1; dbSNP:rs113994136." evidence="23">
    <original>R</original>
    <variation>L</variation>
    <location>
        <position position="382"/>
    </location>
</feature>
<feature type="sequence variant" id="VAR_037366" description="In HIES1; loss of function; dbSNP:rs113994136." evidence="21 23">
    <original>R</original>
    <variation>Q</variation>
    <location>
        <position position="382"/>
    </location>
</feature>
<feature type="sequence variant" id="VAR_037367" description="In HIES1; loss of function; reduced DNA-binding ability; dbSNP:rs113994135." evidence="21 23 39">
    <original>R</original>
    <variation>W</variation>
    <location>
        <position position="382"/>
    </location>
</feature>
<feature type="sequence variant" id="VAR_037368" description="In HIES1." evidence="23">
    <original>F</original>
    <variation>L</variation>
    <location>
        <position position="384"/>
    </location>
</feature>
<feature type="sequence variant" id="VAR_037369" description="In HIES1." evidence="23">
    <original>F</original>
    <variation>S</variation>
    <location>
        <position position="384"/>
    </location>
</feature>
<feature type="sequence variant" id="VAR_089804" description="In ADMIO1; uncertain significance." evidence="53">
    <original>L</original>
    <variation>R</variation>
    <location>
        <position position="387"/>
    </location>
</feature>
<feature type="sequence variant" id="VAR_089805" description="In ADMIO1; uncertain significance." evidence="53">
    <original>T</original>
    <variation>A</variation>
    <location>
        <position position="389"/>
    </location>
</feature>
<feature type="sequence variant" id="VAR_037370" description="In HIES1; likely pathogenic; loss of transcriptional activity; dbSNP:rs397514766." evidence="21 35">
    <original>T</original>
    <variation>I</variation>
    <location>
        <position position="389"/>
    </location>
</feature>
<feature type="sequence variant" id="VAR_089806" description="In ADMIO1; uncertain significance." evidence="53">
    <original>T</original>
    <variation>R</variation>
    <location>
        <position position="389"/>
    </location>
</feature>
<feature type="sequence variant" id="VAR_089807" description="In ADMIO1; uncertain significance." evidence="53">
    <original>T</original>
    <variation>S</variation>
    <location>
        <position position="389"/>
    </location>
</feature>
<feature type="sequence variant" id="VAR_071885" description="In ADMIO1; results in increased transcriptional activation; dbSNP:rs587777648." evidence="36 46">
    <original>K</original>
    <variation>R</variation>
    <location>
        <position position="392"/>
    </location>
</feature>
<feature type="sequence variant" id="VAR_089808" description="In ADMIO1; pathogenic; results in increased transcriptional activation." evidence="46 53">
    <original>M</original>
    <variation>T</variation>
    <location>
        <position position="394"/>
    </location>
</feature>
<feature type="sequence variant" id="VAR_075414" description="In HIES1; uncertain significance; reduced DNA-binding ability." evidence="39">
    <original>N</original>
    <variation>Y</variation>
    <location>
        <position position="395"/>
    </location>
</feature>
<feature type="sequence variant" id="VAR_089809" description="In ADMIO1; uncertain significance." evidence="53">
    <original>F</original>
    <variation>L</variation>
    <location>
        <position position="408"/>
    </location>
</feature>
<feature type="sequence variant" id="VAR_089810" description="In ADMIO1; likely pathogenic." evidence="53">
    <original>E</original>
    <variation>G</variation>
    <location>
        <position position="415"/>
    </location>
</feature>
<feature type="sequence variant" id="VAR_089811" description="In ADMIO1; likely pathogenic; results in increased transcriptional activation." evidence="37 53">
    <original>E</original>
    <variation>K</variation>
    <location>
        <position position="415"/>
    </location>
</feature>
<feature type="sequence variant" id="VAR_089812" description="In ADMIO1; likely pathogenic." evidence="53">
    <original>E</original>
    <variation>Q</variation>
    <location>
        <position position="415"/>
    </location>
</feature>
<feature type="sequence variant" id="VAR_089813" description="In ADMIO1; uncertain significance." evidence="53">
    <original>G</original>
    <variation>R</variation>
    <location>
        <position position="419"/>
    </location>
</feature>
<feature type="sequence variant" id="VAR_089814" description="In ADMIO1; likely pathogenic; results in slightly increased transcriptional activation." evidence="37 53">
    <original>N</original>
    <variation>K</variation>
    <location>
        <position position="420"/>
    </location>
</feature>
<feature type="sequence variant" id="VAR_089815" description="In ADMIO1; likely pathogenic; results in increased transcriptional activation." evidence="37 53">
    <original>G</original>
    <variation>R</variation>
    <location>
        <position position="421"/>
    </location>
</feature>
<feature type="sequence variant" id="VAR_089816" description="In ADMIO1; uncertain significance." evidence="53">
    <original>G</original>
    <variation>R</variation>
    <location>
        <position position="422"/>
    </location>
</feature>
<feature type="sequence variant" id="VAR_037371" description="In HIES1; dbSNP:rs113994137." evidence="23">
    <original>R</original>
    <variation>Q</variation>
    <location>
        <position position="423"/>
    </location>
</feature>
<feature type="sequence variant" id="VAR_075415" description="In HIES1; uncertain significance; reduced DNA-binding ability." evidence="39">
    <original>N</original>
    <variation>Y</variation>
    <location>
        <position position="425"/>
    </location>
</feature>
<feature type="sequence variant" id="VAR_037372" description="In HIES1; loss of function." evidence="21">
    <original>H</original>
    <variation>Y</variation>
    <location>
        <position position="437"/>
    </location>
</feature>
<feature type="sequence variant" id="VAR_089817" description="In ADMIO1; uncertain significance." evidence="53">
    <original>T</original>
    <variation>I</variation>
    <location>
        <position position="443"/>
    </location>
</feature>
<feature type="sequence variant" id="VAR_089818" description="In ADMIO1; uncertain significance." evidence="53">
    <original>H</original>
    <variation>D</variation>
    <location>
        <position position="447"/>
    </location>
</feature>
<feature type="sequence variant" id="VAR_089819" description="In ADMIO1; uncertain significance." evidence="53">
    <original>Q</original>
    <variation>E</variation>
    <location>
        <position position="448"/>
    </location>
</feature>
<feature type="sequence variant" id="VAR_037373" description="In HIES1; loss of function." evidence="21 23">
    <location>
        <position position="463"/>
    </location>
</feature>
<feature type="sequence variant" id="VAR_089820" description="In ADMIO1; uncertain significance." evidence="53">
    <original>E</original>
    <variation>K</variation>
    <location>
        <position position="506"/>
    </location>
</feature>
<feature type="sequence variant" id="VAR_089821" description="In ADMIO1; uncertain significance." evidence="53">
    <original>W</original>
    <variation>R</variation>
    <location>
        <position position="546"/>
    </location>
</feature>
<feature type="sequence variant" id="VAR_037374" description="In dbSNP:rs1064116." evidence="55">
    <original>F</original>
    <variation>Y</variation>
    <location>
        <position position="561"/>
    </location>
</feature>
<feature type="sequence variant" id="VAR_037375" description="In HIES1." evidence="23">
    <original>S</original>
    <variation>N</variation>
    <location>
        <position position="611"/>
    </location>
</feature>
<feature type="sequence variant" id="VAR_037376" description="In HIES1." evidence="23">
    <original>F</original>
    <variation>V</variation>
    <location>
        <position position="621"/>
    </location>
</feature>
<feature type="sequence variant" id="VAR_037377" description="In HIES1." evidence="23">
    <original>T</original>
    <variation>I</variation>
    <location>
        <position position="622"/>
    </location>
</feature>
<feature type="sequence variant" id="VAR_037378" description="In HIES1." evidence="23">
    <original>V</original>
    <variation>L</variation>
    <location>
        <position position="637"/>
    </location>
</feature>
<feature type="sequence variant" id="VAR_037379" description="In HIES1; reduced DNA-binding ability; dbSNP:rs113994139." evidence="23 39">
    <original>V</original>
    <variation>M</variation>
    <location>
        <position position="637"/>
    </location>
</feature>
<feature type="sequence variant" id="VAR_089822" description="In ADMIO1; likely pathogenic; gain-of-function variant resulting in increased transcriptional activation following IFN and LIF stimulation; increased phosphorylation at Y-705 and translocation to the nucleus." evidence="47 53">
    <original>Y</original>
    <variation>F</variation>
    <location>
        <position position="640"/>
    </location>
</feature>
<feature type="sequence variant" id="VAR_089823" description="In ADMIO1; uncertain significance." evidence="53">
    <original>Q</original>
    <variation>R</variation>
    <location>
        <position position="643"/>
    </location>
</feature>
<feature type="sequence variant" id="VAR_037380" description="In HIES1." evidence="23">
    <location>
        <position position="644"/>
    </location>
</feature>
<feature type="sequence variant" id="VAR_071886" description="In ADMIO1; dbSNP:rs587777649." evidence="36 53">
    <original>N</original>
    <variation>K</variation>
    <location>
        <position position="646"/>
    </location>
</feature>
<feature type="sequence variant" id="VAR_037381" description="In HIES1; reduced DNA-binding ability; dbSNP:rs193922721." evidence="23 39">
    <original>Y</original>
    <variation>C</variation>
    <location>
        <position position="657"/>
    </location>
</feature>
<feature type="sequence variant" id="VAR_071887" description="In ADMIO1; dbSNP:rs587777650." evidence="36">
    <original>K</original>
    <variation>N</variation>
    <location>
        <position position="658"/>
    </location>
</feature>
<feature type="sequence variant" id="VAR_089824" description="In ADMIO1; uncertain significance." evidence="53">
    <original>K</original>
    <variation>R</variation>
    <location>
        <position position="658"/>
    </location>
</feature>
<feature type="sequence variant" id="VAR_089825" description="In ADMIO1; likely pathogenic." evidence="37 53">
    <original>T</original>
    <variation>I</variation>
    <location>
        <position position="663"/>
    </location>
</feature>
<feature type="sequence variant" id="VAR_089826" description="In ADMIO1; uncertain significance." evidence="53">
    <original>N</original>
    <variation>Y</variation>
    <location>
        <position position="664"/>
    </location>
</feature>
<feature type="sequence variant" id="VAR_089827" description="In ADMIO1; likely pathogenic; results in increased transcriptional activation." evidence="37">
    <original>A</original>
    <variation>T</variation>
    <location>
        <position position="703"/>
    </location>
</feature>
<feature type="sequence variant" id="VAR_089828" description="In ADMIO1; likely pathogenic." evidence="44 53">
    <original>P</original>
    <variation>L</variation>
    <location>
        <position position="715"/>
    </location>
</feature>
<feature type="sequence variant" id="VAR_071888" description="In ADMIO1; pathogenic; results in increased transcriptional activation; dbSNP:rs869312892." evidence="36 37 53">
    <original>T</original>
    <variation>M</variation>
    <location>
        <position position="716"/>
    </location>
</feature>
<feature type="mutagenesis site" description="Mimics acetylation; increased interaction with EP300; when associated with Q-87." evidence="29">
    <original>K</original>
    <variation>Q</variation>
    <location>
        <position position="49"/>
    </location>
</feature>
<feature type="mutagenesis site" description="Decreased transcription activator activity and interaction with EP300; when associated with R-87." evidence="18 29">
    <original>K</original>
    <variation>R</variation>
    <location>
        <position position="49"/>
    </location>
</feature>
<feature type="mutagenesis site" description="Mimics acetylation; increased interaction with EP300; when associated with Q-49." evidence="29">
    <original>K</original>
    <variation>Q</variation>
    <location>
        <position position="87"/>
    </location>
</feature>
<feature type="mutagenesis site" description="Decreased transcription activator activity and interaction with EP300; when associated with R-49." evidence="18 29">
    <original>K</original>
    <variation>R</variation>
    <location>
        <position position="87"/>
    </location>
</feature>
<feature type="mutagenesis site" description="Inhibits leptin-mediated transactivation of CCND1 promoter. No effect on interaction with INPP5F." evidence="20 38">
    <original>EE</original>
    <variation>AA</variation>
    <location>
        <begin position="434"/>
        <end position="435"/>
    </location>
</feature>
<feature type="mutagenesis site" description="Decreased acetylation by EP300/p300, leading to impaired homodimerization and activation." evidence="14">
    <original>K</original>
    <variation>R</variation>
    <location>
        <position position="685"/>
    </location>
</feature>
<feature type="mutagenesis site" description="Inhibits leptin-mediated transactivation of CCND1 promoter. Abolished phosphorylation by isoform M2 of PKM (PKM2)." evidence="20 33">
    <original>Y</original>
    <variation>F</variation>
    <location>
        <position position="705"/>
    </location>
</feature>
<feature type="sequence conflict" description="In Ref. 4; BAF84622." evidence="63" ref="4">
    <original>T</original>
    <variation>A</variation>
    <location>
        <position position="133"/>
    </location>
</feature>
<feature type="sequence conflict" description="In Ref. 1; AAA58374." evidence="63" ref="1">
    <original>Q</original>
    <variation>H</variation>
    <location>
        <position position="288"/>
    </location>
</feature>
<feature type="sequence conflict" description="In Ref. 1; AAA58374." evidence="63" ref="1">
    <original>P</original>
    <variation>S</variation>
    <location>
        <position position="460"/>
    </location>
</feature>
<feature type="sequence conflict" description="In Ref. 1; AAA58374." evidence="63" ref="1">
    <original>K</original>
    <variation>N</variation>
    <location>
        <position position="548"/>
    </location>
</feature>
<feature type="sequence conflict" description="In Ref. 4; BAF84622." evidence="63" ref="4">
    <original>E</original>
    <variation>V</variation>
    <location>
        <position position="652"/>
    </location>
</feature>
<feature type="sequence conflict" description="In Ref. 1; AAA58374." evidence="63" ref="1">
    <original>V</original>
    <variation>L</variation>
    <location>
        <position position="667"/>
    </location>
</feature>
<feature type="sequence conflict" description="In Ref. 1; AAA58374." evidence="63" ref="1">
    <original>T</original>
    <variation>A</variation>
    <location>
        <position position="730"/>
    </location>
</feature>
<feature type="helix" evidence="75">
    <location>
        <begin position="139"/>
        <end position="177"/>
    </location>
</feature>
<feature type="helix" evidence="75">
    <location>
        <begin position="194"/>
        <end position="237"/>
    </location>
</feature>
<feature type="helix" evidence="75">
    <location>
        <begin position="239"/>
        <end position="251"/>
    </location>
</feature>
<feature type="helix" evidence="75">
    <location>
        <begin position="261"/>
        <end position="290"/>
    </location>
</feature>
<feature type="helix" evidence="75">
    <location>
        <begin position="297"/>
        <end position="320"/>
    </location>
</feature>
<feature type="strand" evidence="75">
    <location>
        <begin position="321"/>
        <end position="328"/>
    </location>
</feature>
<feature type="strand" evidence="75">
    <location>
        <begin position="338"/>
        <end position="340"/>
    </location>
</feature>
<feature type="strand" evidence="75">
    <location>
        <begin position="345"/>
        <end position="353"/>
    </location>
</feature>
<feature type="helix" evidence="75">
    <location>
        <begin position="356"/>
        <end position="358"/>
    </location>
</feature>
<feature type="turn" evidence="75">
    <location>
        <begin position="359"/>
        <end position="361"/>
    </location>
</feature>
<feature type="strand" evidence="75">
    <location>
        <begin position="363"/>
        <end position="368"/>
    </location>
</feature>
<feature type="strand" evidence="76">
    <location>
        <begin position="373"/>
        <end position="376"/>
    </location>
</feature>
<feature type="strand" evidence="75">
    <location>
        <begin position="384"/>
        <end position="388"/>
    </location>
</feature>
<feature type="strand" evidence="75">
    <location>
        <begin position="391"/>
        <end position="393"/>
    </location>
</feature>
<feature type="turn" evidence="75">
    <location>
        <begin position="398"/>
        <end position="401"/>
    </location>
</feature>
<feature type="strand" evidence="75">
    <location>
        <begin position="404"/>
        <end position="415"/>
    </location>
</feature>
<feature type="helix" evidence="75">
    <location>
        <begin position="432"/>
        <end position="434"/>
    </location>
</feature>
<feature type="strand" evidence="75">
    <location>
        <begin position="439"/>
        <end position="447"/>
    </location>
</feature>
<feature type="strand" evidence="75">
    <location>
        <begin position="450"/>
        <end position="457"/>
    </location>
</feature>
<feature type="strand" evidence="75">
    <location>
        <begin position="461"/>
        <end position="466"/>
    </location>
</feature>
<feature type="helix" evidence="75">
    <location>
        <begin position="467"/>
        <end position="469"/>
    </location>
</feature>
<feature type="helix" evidence="75">
    <location>
        <begin position="470"/>
        <end position="483"/>
    </location>
</feature>
<feature type="turn" evidence="75">
    <location>
        <begin position="490"/>
        <end position="494"/>
    </location>
</feature>
<feature type="helix" evidence="75">
    <location>
        <begin position="501"/>
        <end position="513"/>
    </location>
</feature>
<feature type="strand" evidence="77">
    <location>
        <begin position="514"/>
        <end position="517"/>
    </location>
</feature>
<feature type="helix" evidence="75">
    <location>
        <begin position="522"/>
        <end position="533"/>
    </location>
</feature>
<feature type="helix" evidence="75">
    <location>
        <begin position="546"/>
        <end position="549"/>
    </location>
</feature>
<feature type="strand" evidence="75">
    <location>
        <begin position="557"/>
        <end position="559"/>
    </location>
</feature>
<feature type="helix" evidence="75">
    <location>
        <begin position="561"/>
        <end position="574"/>
    </location>
</feature>
<feature type="helix" evidence="75">
    <location>
        <begin position="577"/>
        <end position="582"/>
    </location>
</feature>
<feature type="helix" evidence="75">
    <location>
        <begin position="591"/>
        <end position="600"/>
    </location>
</feature>
<feature type="strand" evidence="75">
    <location>
        <begin position="605"/>
        <end position="610"/>
    </location>
</feature>
<feature type="strand" evidence="75">
    <location>
        <begin position="619"/>
        <end position="626"/>
    </location>
</feature>
<feature type="strand" evidence="75">
    <location>
        <begin position="632"/>
        <end position="636"/>
    </location>
</feature>
<feature type="helix" evidence="75">
    <location>
        <begin position="642"/>
        <end position="645"/>
    </location>
</feature>
<feature type="helix" evidence="75">
    <location>
        <begin position="650"/>
        <end position="656"/>
    </location>
</feature>
<feature type="turn" evidence="75">
    <location>
        <begin position="674"/>
        <end position="676"/>
    </location>
</feature>
<feature type="helix" evidence="75">
    <location>
        <begin position="679"/>
        <end position="683"/>
    </location>
</feature>
<feature type="helix" evidence="75">
    <location>
        <begin position="684"/>
        <end position="686"/>
    </location>
</feature>
<feature type="modified residue" description="Phosphotyrosine" evidence="68 74">
    <location sequence="P40763-2">
        <position position="704"/>
    </location>
</feature>
<comment type="function">
    <text evidence="1 4 8 10 11 14 18 20 27 29 33 34 42 45 52 54">Signal transducer and transcription activator that mediates cellular responses to interleukins, KITLG/SCF, LEP and other growth factors (PubMed:10688651, PubMed:12359225, PubMed:12873986, PubMed:15194700, PubMed:15653507, PubMed:16285960, PubMed:17344214, PubMed:18242580, PubMed:18782771, PubMed:22306293, PubMed:23084476, PubMed:28262505, PubMed:32929201, PubMed:38404237). Once activated, recruits coactivators, such as NCOA1 or MED1, to the promoter region of the target gene (PubMed:15653507, PubMed:16285960, PubMed:17344214, PubMed:18782771, PubMed:28262505, PubMed:32929201). May mediate cellular responses to activated FGFR1, FGFR2, FGFR3 and FGFR4 (PubMed:12873986). Upon activation of IL6ST/gp130 signaling by interleukin-6 (IL6), binds to the IL6-responsive elements identified in the promoters of various acute-phase protein genes (PubMed:12359225). Activated by IL31 through IL31RA (PubMed:15194700). Acts as a regulator of inflammatory response by regulating differentiation of naive CD4(+) T-cells into T-helper Th17 or regulatory T-cells (Treg): acetylation promotes its transcription activity and cell differentiation while deacetylation and oxidation of lysine residues by LOXL3 inhibits differentiation (PubMed:28065600, PubMed:28262505). Involved in cell cycle regulation by inducing the expression of key genes for the progression from G1 to S phase, such as CCND1 (PubMed:17344214). Mediates the effects of LEP on melanocortin production, body energy homeostasis and lactation (By similarity). May play an apoptotic role by transctivating BIRC5 expression under LEP activation (PubMed:18242580). Cytoplasmic STAT3 represses macroautophagy by inhibiting EIF2AK2/PKR activity (PubMed:23084476). Plays a crucial role in basal beta cell functions, such as regulation of insulin secretion (By similarity). Following JAK/STAT signaling activation and as part of a complex with NFATC3 and NFATC4, binds to the alpha-beta E4 promoter region of CRYAB and activates transcription in cardiomyocytes (By similarity).</text>
</comment>
<comment type="subunit">
    <text evidence="1 2 4 5 6 10 11 13 14 15 16 17 20 22 24 25 26 29 30 31 34 38 40 42 45 48 50 51 52 57">Forms a homodimer or a heterodimer with a related family member (at least STAT1) (PubMed:15653507, PubMed:28065600). Component of a promoter-binding complex composed of STAT3, NFATC3 and NFATC4; complex formation is enhanced by calcineurin (By similarity). Interacts with IL31RA, NCOA1, PELP1, SIPAR, SOCS7, STATIP1 and TMF1 (By similarity) (PubMed:15194700, PubMed:15467733, PubMed:15677474, PubMed:15994929, PubMed:17344214). Interacts with IL23R in presence of IL23 (PubMed:12023369). Interacts (via SH2 domain) with NLK. Interacts with ARL2BP; the interaction is enhanced by LIF and JAK1 expression (By similarity). Interacts with KPNA4 and KPNA5; KPNA4 may be the primary mediator of nuclear import (By similarity). Interacts with CAV2; the interaction is increased on insulin-induced tyrosine phosphorylation of CAV2 and leads to STAT3 activation (By similarity). Interacts with ARL2BP; interaction is enhanced with ARL2 (PubMed:18234692). Interacts with NEK6 (By similarity). Binds to CDK9 when activated and nuclear (PubMed:17956865). Interacts with BMX (PubMed:10688651). Interacts with ZIPK/DAPK3 (PubMed:16219639). Interacts with PIAS3; the interaction occurs on stimulation by IL6, CNTF or OSM and inhibits the DNA binding activity of STAT3 (PubMed:9388184). In prostate cancer cells, interacts with PRKCE and promotes DNA binding activity of STAT3 (PubMed:17875724). Interacts with STMN3, antagonizing its microtubule-destabilizing activity (By similarity). Interacts with the 'Lys-129' acetylated form of BIRC5/survivin (PubMed:20826784). Interacts with FER (PubMed:19147545). Interacts (via SH2 domain) with EIF2AK2/PKR (via the kinase catalytic domain) (PubMed:23084476). Interacts with INPP5F; the interaction is independent of STAT3 Tyr-705 phosphorylation status (PubMed:25476455). Interacts with FGFR4 (PubMed:26675719). Interacts with OCIAD1 (By similarity). Interacts with OCIAD2 (PubMed:29743632). Interacts (unphosphorylated or phosphorylated at Ser-727) with PHB1 (PubMed:31899195). Interacts and may form heterodimers with NHLH1 (By similarity). Found in a complex with SLC39A6, SLC39A10 and with the 'Ser-727' phosphorylated form of STAT3 throughout mitosis (PubMed:32797246). Interacts (when phosphorylated at Tyr-705) with CD274/PD-L1; promoting nuclear translocation of CD274/PD-L1 (PubMed:32929201). Interacts (when acetylated) with EP300 (via bromo domain); interaction takes place following STAT3 acetylation by EP300 and promotes enhanceosome assembly (PubMed:18782771). Interacts (when acetylated) with BRD2 (via bromo domain); interaction promotes STAT3 recruitment to chromatin and T-helper Th17 cell differentiation (PubMed:28262505). Interacts with FAM220A/SIPAR; the interaction occurs in both the nucleus and the cytoplasm, is enhanced by IL6 and promotes STAT3 dephosphorylation (By similarity). Interacts in both unphosphorylated and phosphorylated forms with FAM220A but interacts preferentially in the phosphorylated form in the nucleus (By similarity). Interacts with PTPN2; the interaction is promoted by FAM220A and leads to STAT3 dephosphorylation which negatively regulates STAT3 transcriptional activator activity (By similarity).</text>
</comment>
<comment type="subunit">
    <text evidence="7">(Microbial infection) Interacts with HCV core protein.</text>
</comment>
<comment type="subunit">
    <text evidence="49">(Microbial infection) Interacts with S.typhimurium SarA.</text>
</comment>
<comment type="subunit">
    <text evidence="41">(Microbial infection) Interacts with human cytomegalovirus (HHV-5) immediate early protein IE1; this interaction leads to STAT3 nuclear accumulation and disruption of IL6-induced STAT3 phosphorylation.</text>
</comment>
<comment type="interaction">
    <interactant intactId="EBI-518675">
        <id>P40763</id>
    </interactant>
    <interactant intactId="EBI-1046765">
        <id>O14874</id>
        <label>BCKDK</label>
    </interactant>
    <organismsDiffer>false</organismsDiffer>
    <experiments>2</experiments>
</comment>
<comment type="interaction">
    <interactant intactId="EBI-518675">
        <id>P40763</id>
    </interactant>
    <interactant intactId="EBI-1104509">
        <id>Q96G01</id>
        <label>BICD1</label>
    </interactant>
    <organismsDiffer>false</organismsDiffer>
    <experiments>2</experiments>
</comment>
<comment type="interaction">
    <interactant intactId="EBI-518675">
        <id>P40763</id>
    </interactant>
    <interactant intactId="EBI-2105445">
        <id>P51451</id>
        <label>BLK</label>
    </interactant>
    <organismsDiffer>false</organismsDiffer>
    <experiments>9</experiments>
</comment>
<comment type="interaction">
    <interactant intactId="EBI-518675">
        <id>P40763</id>
    </interactant>
    <interactant intactId="EBI-696657">
        <id>P51813</id>
        <label>BMX</label>
    </interactant>
    <organismsDiffer>false</organismsDiffer>
    <experiments>8</experiments>
</comment>
<comment type="interaction">
    <interactant intactId="EBI-518675">
        <id>P40763</id>
    </interactant>
    <interactant intactId="EBI-1542113">
        <id>P07384</id>
        <label>CAPN1</label>
    </interactant>
    <organismsDiffer>false</organismsDiffer>
    <experiments>2</experiments>
</comment>
<comment type="interaction">
    <interactant intactId="EBI-518675">
        <id>P40763</id>
    </interactant>
    <interactant intactId="EBI-1383449">
        <id>P50750</id>
        <label>CDK9</label>
    </interactant>
    <organismsDiffer>false</organismsDiffer>
    <experiments>2</experiments>
</comment>
<comment type="interaction">
    <interactant intactId="EBI-518675">
        <id>P40763</id>
    </interactant>
    <interactant intactId="EBI-1046676">
        <id>P31146</id>
        <label>CORO1A</label>
    </interactant>
    <organismsDiffer>false</organismsDiffer>
    <experiments>2</experiments>
</comment>
<comment type="interaction">
    <interactant intactId="EBI-518675">
        <id>P40763</id>
    </interactant>
    <interactant intactId="EBI-7331284">
        <id>Q99062</id>
        <label>CSF3R</label>
    </interactant>
    <organismsDiffer>false</organismsDiffer>
    <experiments>4</experiments>
</comment>
<comment type="interaction">
    <interactant intactId="EBI-518675">
        <id>P40763</id>
    </interactant>
    <interactant intactId="EBI-77321">
        <id>Q9UER7</id>
        <label>DAXX</label>
    </interactant>
    <organismsDiffer>false</organismsDiffer>
    <experiments>4</experiments>
</comment>
<comment type="interaction">
    <interactant intactId="EBI-518675">
        <id>P40763</id>
    </interactant>
    <interactant intactId="EBI-6139214">
        <id>O95661</id>
        <label>DIRAS3</label>
    </interactant>
    <organismsDiffer>false</organismsDiffer>
    <experiments>3</experiments>
</comment>
<comment type="interaction">
    <interactant intactId="EBI-518675">
        <id>P40763</id>
    </interactant>
    <interactant intactId="EBI-711968">
        <id>Q13011</id>
        <label>ECH1</label>
    </interactant>
    <organismsDiffer>false</organismsDiffer>
    <experiments>2</experiments>
</comment>
<comment type="interaction">
    <interactant intactId="EBI-518675">
        <id>P40763</id>
    </interactant>
    <interactant intactId="EBI-719602">
        <id>P30084</id>
        <label>ECHS1</label>
    </interactant>
    <organismsDiffer>false</organismsDiffer>
    <experiments>3</experiments>
</comment>
<comment type="interaction">
    <interactant intactId="EBI-518675">
        <id>P40763</id>
    </interactant>
    <interactant intactId="EBI-297353">
        <id>P00533</id>
        <label>EGFR</label>
    </interactant>
    <organismsDiffer>false</organismsDiffer>
    <experiments>15</experiments>
</comment>
<comment type="interaction">
    <interactant intactId="EBI-518675">
        <id>P40763</id>
    </interactant>
    <interactant intactId="EBI-641062">
        <id>P04626</id>
        <label>ERBB2</label>
    </interactant>
    <organismsDiffer>false</organismsDiffer>
    <experiments>9</experiments>
</comment>
<comment type="interaction">
    <interactant intactId="EBI-518675">
        <id>P40763</id>
    </interactant>
    <interactant intactId="EBI-530054">
        <id>Q15910</id>
        <label>EZH2</label>
    </interactant>
    <organismsDiffer>false</organismsDiffer>
    <experiments>5</experiments>
</comment>
<comment type="interaction">
    <interactant intactId="EBI-518675">
        <id>P40763</id>
    </interactant>
    <interactant intactId="EBI-372506">
        <id>Q8TAE8</id>
        <label>GADD45GIP1</label>
    </interactant>
    <organismsDiffer>false</organismsDiffer>
    <experiments>4</experiments>
</comment>
<comment type="interaction">
    <interactant intactId="EBI-518675">
        <id>P40763</id>
    </interactant>
    <interactant intactId="EBI-641642">
        <id>Q9BVP2</id>
        <label>GNL3</label>
    </interactant>
    <organismsDiffer>false</organismsDiffer>
    <experiments>2</experiments>
</comment>
<comment type="interaction">
    <interactant intactId="EBI-518675">
        <id>P40763</id>
    </interactant>
    <interactant intactId="EBI-353389">
        <id>P12268</id>
        <label>IMPDH2</label>
    </interactant>
    <organismsDiffer>false</organismsDiffer>
    <experiments>3</experiments>
</comment>
<comment type="interaction">
    <interactant intactId="EBI-518675">
        <id>P40763</id>
    </interactant>
    <interactant intactId="EBI-1383438">
        <id>P23458</id>
        <label>JAK1</label>
    </interactant>
    <organismsDiffer>false</organismsDiffer>
    <experiments>2</experiments>
</comment>
<comment type="interaction">
    <interactant intactId="EBI-518675">
        <id>P40763</id>
    </interactant>
    <interactant intactId="EBI-1364">
        <id>Q07666</id>
        <label>KHDRBS1</label>
    </interactant>
    <organismsDiffer>false</organismsDiffer>
    <experiments>2</experiments>
</comment>
<comment type="interaction">
    <interactant intactId="EBI-518675">
        <id>P40763</id>
    </interactant>
    <interactant intactId="EBI-739696">
        <id>P25791</id>
        <label>LMO2</label>
    </interactant>
    <organismsDiffer>false</organismsDiffer>
    <experiments>3</experiments>
</comment>
<comment type="interaction">
    <interactant intactId="EBI-518675">
        <id>P40763</id>
    </interactant>
    <interactant intactId="EBI-358684">
        <id>O43318</id>
        <label>MAP3K7</label>
    </interactant>
    <organismsDiffer>false</organismsDiffer>
    <experiments>4</experiments>
</comment>
<comment type="interaction">
    <interactant intactId="EBI-518675">
        <id>P40763</id>
    </interactant>
    <interactant intactId="EBI-2116951">
        <id>O15264</id>
        <label>MAPK13</label>
    </interactant>
    <organismsDiffer>false</organismsDiffer>
    <experiments>2</experiments>
</comment>
<comment type="interaction">
    <interactant intactId="EBI-518675">
        <id>P40763</id>
    </interactant>
    <interactant intactId="EBI-713568">
        <id>P45984</id>
        <label>MAPK9</label>
    </interactant>
    <organismsDiffer>false</organismsDiffer>
    <experiments>2</experiments>
</comment>
<comment type="interaction">
    <interactant intactId="EBI-518675">
        <id>P40763</id>
    </interactant>
    <interactant intactId="EBI-713586">
        <id>P45984-1</id>
        <label>MAPK9</label>
    </interactant>
    <organismsDiffer>false</organismsDiffer>
    <experiments>3</experiments>
</comment>
<comment type="interaction">
    <interactant intactId="EBI-518675">
        <id>P40763</id>
    </interactant>
    <interactant intactId="EBI-3940432">
        <id>Q8TE76</id>
        <label>MORC4</label>
    </interactant>
    <organismsDiffer>false</organismsDiffer>
    <experiments>2</experiments>
</comment>
<comment type="interaction">
    <interactant intactId="EBI-518675">
        <id>P40763</id>
    </interactant>
    <interactant intactId="EBI-720602">
        <id>Q92665</id>
        <label>MRPS31</label>
    </interactant>
    <organismsDiffer>false</organismsDiffer>
    <experiments>2</experiments>
</comment>
<comment type="interaction">
    <interactant intactId="EBI-518675">
        <id>P40763</id>
    </interactant>
    <interactant intactId="EBI-2007911">
        <id>Q16236</id>
        <label>NFE2L2</label>
    </interactant>
    <organismsDiffer>false</organismsDiffer>
    <experiments>5</experiments>
</comment>
<comment type="interaction">
    <interactant intactId="EBI-518675">
        <id>P40763</id>
    </interactant>
    <interactant intactId="EBI-20559045">
        <id>Q14938-3</id>
        <label>NFIX</label>
    </interactant>
    <organismsDiffer>false</organismsDiffer>
    <experiments>3</experiments>
</comment>
<comment type="interaction">
    <interactant intactId="EBI-518675">
        <id>P40763</id>
    </interactant>
    <interactant intactId="EBI-20558886">
        <id>Q14938-4</id>
        <label>NFIX</label>
    </interactant>
    <organismsDiffer>false</organismsDiffer>
    <experiments>3</experiments>
</comment>
<comment type="interaction">
    <interactant intactId="EBI-518675">
        <id>P40763</id>
    </interactant>
    <interactant intactId="EBI-721550">
        <id>P22736</id>
        <label>NR4A1</label>
    </interactant>
    <organismsDiffer>false</organismsDiffer>
    <experiments>3</experiments>
</comment>
<comment type="interaction">
    <interactant intactId="EBI-518675">
        <id>P40763</id>
    </interactant>
    <interactant intactId="EBI-3940481">
        <id>Q9ULD0</id>
        <label>OGDHL</label>
    </interactant>
    <organismsDiffer>false</organismsDiffer>
    <experiments>2</experiments>
</comment>
<comment type="interaction">
    <interactant intactId="EBI-518675">
        <id>P40763</id>
    </interactant>
    <interactant intactId="EBI-78539">
        <id>P06401</id>
        <label>PGR</label>
    </interactant>
    <organismsDiffer>false</organismsDiffer>
    <experiments>3</experiments>
</comment>
<comment type="interaction">
    <interactant intactId="EBI-518675">
        <id>P40763</id>
    </interactant>
    <interactant intactId="EBI-11956563">
        <id>Q96HA1-2</id>
        <label>POM121</label>
    </interactant>
    <organismsDiffer>false</organismsDiffer>
    <experiments>3</experiments>
</comment>
<comment type="interaction">
    <interactant intactId="EBI-518675">
        <id>P40763</id>
    </interactant>
    <interactant intactId="EBI-1266300">
        <id>P32119</id>
        <label>PRDX2</label>
    </interactant>
    <organismsDiffer>false</organismsDiffer>
    <experiments>4</experiments>
</comment>
<comment type="interaction">
    <interactant intactId="EBI-518675">
        <id>P40763</id>
    </interactant>
    <interactant intactId="EBI-298640">
        <id>Q14289</id>
        <label>PTK2B</label>
    </interactant>
    <organismsDiffer>false</organismsDiffer>
    <experiments>4</experiments>
</comment>
<comment type="interaction">
    <interactant intactId="EBI-518675">
        <id>P40763</id>
    </interactant>
    <interactant intactId="EBI-968788">
        <id>P18031</id>
        <label>PTPN1</label>
    </interactant>
    <organismsDiffer>false</organismsDiffer>
    <experiments>2</experiments>
</comment>
<comment type="interaction">
    <interactant intactId="EBI-518675">
        <id>P40763</id>
    </interactant>
    <interactant intactId="EBI-73886">
        <id>Q04206</id>
        <label>RELA</label>
    </interactant>
    <organismsDiffer>false</organismsDiffer>
    <experiments>4</experiments>
</comment>
<comment type="interaction">
    <interactant intactId="EBI-518675">
        <id>P40763</id>
    </interactant>
    <interactant intactId="EBI-2480756">
        <id>P07949</id>
        <label>RET</label>
    </interactant>
    <organismsDiffer>false</organismsDiffer>
    <experiments>3</experiments>
</comment>
<comment type="interaction">
    <interactant intactId="EBI-518675">
        <id>P40763</id>
    </interactant>
    <interactant intactId="EBI-366288">
        <id>O75116</id>
        <label>ROCK2</label>
    </interactant>
    <organismsDiffer>false</organismsDiffer>
    <experiments>3</experiments>
</comment>
<comment type="interaction">
    <interactant intactId="EBI-518675">
        <id>P40763</id>
    </interactant>
    <interactant intactId="EBI-351206">
        <id>P46781</id>
        <label>RPS9</label>
    </interactant>
    <organismsDiffer>false</organismsDiffer>
    <experiments>2</experiments>
</comment>
<comment type="interaction">
    <interactant intactId="EBI-518675">
        <id>P40763</id>
    </interactant>
    <interactant intactId="EBI-2935583">
        <id>O00570</id>
        <label>SOX1</label>
    </interactant>
    <organismsDiffer>false</organismsDiffer>
    <experiments>2</experiments>
</comment>
<comment type="interaction">
    <interactant intactId="EBI-518675">
        <id>P40763</id>
    </interactant>
    <interactant intactId="EBI-298336">
        <id>P08047</id>
        <label>SP1</label>
    </interactant>
    <organismsDiffer>false</organismsDiffer>
    <experiments>4</experiments>
</comment>
<comment type="interaction">
    <interactant intactId="EBI-518675">
        <id>P40763</id>
    </interactant>
    <interactant intactId="EBI-750459">
        <id>P30626</id>
        <label>SRI</label>
    </interactant>
    <organismsDiffer>false</organismsDiffer>
    <experiments>3</experiments>
</comment>
<comment type="interaction">
    <interactant intactId="EBI-518675">
        <id>P40763</id>
    </interactant>
    <interactant intactId="EBI-1057697">
        <id>P42224</id>
        <label>STAT1</label>
    </interactant>
    <organismsDiffer>false</organismsDiffer>
    <experiments>10</experiments>
</comment>
<comment type="interaction">
    <interactant intactId="EBI-518675">
        <id>P40763</id>
    </interactant>
    <interactant intactId="EBI-518675">
        <id>P40763</id>
        <label>STAT3</label>
    </interactant>
    <organismsDiffer>false</organismsDiffer>
    <experiments>8</experiments>
</comment>
<comment type="interaction">
    <interactant intactId="EBI-518675">
        <id>P40763</id>
    </interactant>
    <interactant intactId="EBI-3921363">
        <id>Q06520</id>
        <label>SULT2A1</label>
    </interactant>
    <organismsDiffer>false</organismsDiffer>
    <experiments>2</experiments>
</comment>
<comment type="interaction">
    <interactant intactId="EBI-518675">
        <id>P40763</id>
    </interactant>
    <interactant intactId="EBI-78302">
        <id>P43405</id>
        <label>SYK</label>
    </interactant>
    <organismsDiffer>false</organismsDiffer>
    <experiments>10</experiments>
</comment>
<comment type="interaction">
    <interactant intactId="EBI-518675">
        <id>P40763</id>
    </interactant>
    <interactant intactId="EBI-22225085">
        <id>Q810M5</id>
        <label>Zdhhc19</label>
    </interactant>
    <organismsDiffer>true</organismsDiffer>
    <experiments>4</experiments>
</comment>
<comment type="interaction">
    <interactant intactId="EBI-518675">
        <id>P40763</id>
    </interactant>
    <interactant intactId="EBI-7971837">
        <id>Q9DUM3</id>
    </interactant>
    <organismsDiffer>true</organismsDiffer>
    <experiments>4</experiments>
</comment>
<comment type="interaction">
    <interactant intactId="EBI-10692009">
        <id>P40763-2</id>
    </interactant>
    <interactant intactId="EBI-77613">
        <id>P05067</id>
        <label>APP</label>
    </interactant>
    <organismsDiffer>false</organismsDiffer>
    <experiments>3</experiments>
</comment>
<comment type="subcellular location">
    <subcellularLocation>
        <location evidence="14 18 42 50">Cytoplasm</location>
    </subcellularLocation>
    <subcellularLocation>
        <location evidence="14 18 42 47 50">Nucleus</location>
    </subcellularLocation>
    <text evidence="2 14 18 47">Shuttles between the nucleus and the cytoplasm (PubMed:29162862). Translocated into the nucleus upon tyrosine phosphorylation and dimerization, in response to signaling by activated FGFR1, FGFR2, FGFR3 or FGFR4 (PubMed:15653507, PubMed:16285960). Constitutive nuclear presence is independent of tyrosine phosphorylation. Predominantly present in the cytoplasm without stimuli. Upon leukemia inhibitory factor (LIF) stimulation, accumulates in the nucleus. The complex composed of BART and ARL2 plays an important role in the nuclear translocation and retention of STAT3. Identified in a complex with LYN and PAG1. Translocates to the nucleus in the presence of EDN1 (By similarity).</text>
</comment>
<comment type="alternative products">
    <event type="alternative splicing"/>
    <isoform>
        <id>P40763-1</id>
        <name>1</name>
        <sequence type="displayed"/>
    </isoform>
    <isoform>
        <id>P40763-2</id>
        <name>Del-701</name>
        <sequence type="described" ref="VSP_010474"/>
    </isoform>
    <isoform>
        <id>P40763-3</id>
        <name>3</name>
        <sequence type="described" ref="VSP_055918 VSP_055919"/>
    </isoform>
</comment>
<comment type="tissue specificity">
    <text evidence="50">Heart, brain, placenta, lung, liver, skeletal muscle, kidney and pancreas. Expressed in naive CD4(+) T cells as well as T-helper Th17, Th1 and Th2 cells (PubMed:31899195).</text>
</comment>
<comment type="PTM">
    <text evidence="1 4 8 9 12 17 19 20 22 26 28 30 32 33 47 52 56">Tyrosine phosphorylated upon stimulation with EGF. Tyrosine phosphorylated in response to constitutively activated FGFR1, FGFR2, FGFR3 and FGFR4 (By similarity). Activated through tyrosine phosphorylation by BMX. Tyrosine phosphorylated in response to IL6, IL11, LIF, CNTF, KITLG/SCF, CSF1, EGF, PDGF, IFN-alpha, LEP and OSM. Activated KIT promotes phosphorylation on tyrosine residues and subsequent translocation to the nucleus. Phosphorylated on serine upon DNA damage, probably by ATM or ATR. Serine phosphorylation is important for the formation of stable DNA-binding STAT3 homodimers and maximal transcriptional activity. ARL2BP may participate in keeping the phosphorylated state of STAT3 within the nucleus. Upon LPS challenge, phosphorylated within the nucleus by IRAK1. Upon erythropoietin treatment, phosphorylated on Ser-727 by RPS6KA5. Dephosphorylation on tyrosine residues by PTPN2 negatively regulates IL6/interleukin-6 signaling (By similarity). Phosphorylation at Tyr-705 by PTK6, isoform M2 of PKM (PKM2) or FER leads to an increase of its transcriptional activity (PubMed:12763138, PubMed:16568091, PubMed:21135090, PubMed:22306293, PubMed:32929201). Phosphorylation at Tyr-705 is increased in the presence of calcineurin (By similarity). Phosphorylation at Tyr-640 by TYK2 negatively regulates transcriptional activity (PubMed:29162862).</text>
</comment>
<comment type="PTM">
    <text evidence="14 18 29 42 45">Acetylated on lysine residues by EP300/p300, promoting its activation (PubMed:15653507, PubMed:16285960, PubMed:18782771). Acetylation at Lys-49 and Lys-87 by EP300/p300 promotes its activation (PubMed:15653507, PubMed:16285960, PubMed:28262505). Acetylation at Lys-87 by EP300/p300 promotes its association with BRD2 and recruitment to chromatin (PubMed:28262505). Deacetylated at Lys-49 and Lys-87 by HDAC1 (PubMed:16285960). Acetylation at Lys-685 by EP300/p300 promotes its homodimerization and activation (PubMed:15653507). Deacetylated at Lys-685 by HDAC3 (PubMed:15653507). Acetylated on lysine residues by CREBBP (PubMed:28065600). Deacetylation by LOXL3 leads to disrupt STAT3 dimerization and inhibit STAT3 transcription activity (PubMed:28065600). Oxidation of lysine residues to allysine on STAT3 preferentially takes place on lysine residues that are acetylated (PubMed:28065600).</text>
</comment>
<comment type="PTM">
    <text evidence="42">Some lysine residues are oxidized to allysine by LOXL3, leading to disrupt STAT3 dimerization and inhibit STAT3 transcription activity (PubMed:28065600). Oxidation of lysine residues to allysine on STAT3 preferentially takes place on lysine residues that are acetylated (PubMed:28065600).</text>
</comment>
<comment type="PTM">
    <text evidence="49">(Microbial infection) Phosphorylated on Tyr-705 in the presence of S.typhimurium SarA.</text>
</comment>
<comment type="disease" evidence="21 23 35 39">
    <disease id="DI-01767">
        <name>Hyper-IgE syndrome 1, autosomal dominant, with recurrent infections</name>
        <acronym>HIES1</acronym>
        <description>A rare disorder of immunity and connective tissue characterized by immunodeficiency, chronic eosinophilia, distinctive coarse facial appearance, abnormal dentition, hyperextensibility of the joints, and bone fractures.</description>
        <dbReference type="MIM" id="147060"/>
    </disease>
    <text>The disease is caused by variants affecting the gene represented in this entry.</text>
</comment>
<comment type="disease" evidence="36 37 43 44 46 47 53 54">
    <disease id="DI-04194">
        <name>Autoimmune disease, multisystem, infantile-onset, 1</name>
        <acronym>ADMIO1</acronym>
        <description>A disorder characterized by early childhood onset of a spectrum of autoimmune manifestations affecting multiple organs, including insulin-dependent diabetes mellitus and autoimmune enteropathy or celiac disease. Other features include short stature, non-specific dermatitis, hypothyroidism, autoimmune arthritis, and delayed puberty.</description>
        <dbReference type="MIM" id="615952"/>
    </disease>
    <text>The disease is caused by variants affecting the gene represented in this entry.</text>
</comment>
<comment type="miscellaneous">
    <text>Involved in the gp130-mediated signaling pathway.</text>
</comment>
<comment type="similarity">
    <text evidence="63">Belongs to the transcription factor STAT family.</text>
</comment>
<comment type="caution">
    <text evidence="64 65">Was shown to be S-palmitoylated by ZDHHC19, leading to STAT3 homodimerization. However, this study was later retracted.</text>
</comment>
<comment type="online information" name="Wikipedia">
    <link uri="https://en.wikipedia.org/wiki/STAT3"/>
    <text>STAT3 entry</text>
</comment>
<comment type="online information" name="Atlas of Genetics and Cytogenetics in Oncology and Haematology">
    <link uri="https://atlasgeneticsoncology.org/gene/444/STAT3"/>
</comment>
<comment type="online information" name="STAT3base">
    <link uri="https://databases.lovd.nl/shared/genes/STAT3"/>
    <text>STAT3 mutation db</text>
</comment>
<name>STAT3_HUMAN</name>
<proteinExistence type="evidence at protein level"/>
<sequence>MAQWNQLQQLDTRYLEQLHQLYSDSFPMELRQFLAPWIESQDWAYAASKESHATLVFHNLLGEIDQQYSRFLQESNVLYQHNLRRIKQFLQSRYLEKPMEIARIVARCLWEESRLLQTAATAAQQGGQANHPTAAVVTEKQQMLEQHLQDVRKRVQDLEQKMKVVENLQDDFDFNYKTLKSQGDMQDLNGNNQSVTRQKMQQLEQMLTALDQMRRSIVSELAGLLSAMEYVQKTLTDEELADWKRRQQIACIGGPPNICLDRLENWITSLAESQLQTRQQIKKLEELQQKVSYKGDPIVQHRPMLEERIVELFRNLMKSAFVVERQPCMPMHPDRPLVIKTGVQFTTKVRLLVKFPELNYQLKIKVCIDKDSGDVAALRGSRKFNILGTNTKVMNMEESNNGSLSAEFKHLTLREQRCGNGGRANCDASLIVTEELHLITFETEVYHQGLKIDLETHSLPVVVISNICQMPNAWASILWYNMLTNNPKNVNFFTKPPIGTWDQVAEVLSWQFSSTTKRGLSIEQLTTLAEKLLGPGVNYSGCQITWAKFCKENMAGKGFSFWVWLDNIIDLVKKYILALWNEGYIMGFISKERERAILSTKPPGTFLLRFSESSKEGGVTFTWVEKDISGKTQIQSVEPYTKQQLNNMSFAEIIMGYKIMDATNILVSPLVYLYPDIPKEEAFGKYCRPESQEHPEADPGSAAPYLKTKFICVTPTTCSNTIDLPMSPRTLDSLMQFGNNGEGAEPSAGGQFESLTFDMELTSECATSPM</sequence>
<gene>
    <name evidence="61 66" type="primary">STAT3</name>
    <name evidence="60" type="synonym">APRF</name>
</gene>
<keyword id="KW-0002">3D-structure</keyword>
<keyword id="KW-0007">Acetylation</keyword>
<keyword id="KW-0010">Activator</keyword>
<keyword id="KW-0025">Alternative splicing</keyword>
<keyword id="KW-0963">Cytoplasm</keyword>
<keyword id="KW-0219">Diabetes mellitus</keyword>
<keyword id="KW-0225">Disease variant</keyword>
<keyword id="KW-0238">DNA-binding</keyword>
<keyword id="KW-0242">Dwarfism</keyword>
<keyword id="KW-0945">Host-virus interaction</keyword>
<keyword id="KW-0539">Nucleus</keyword>
<keyword id="KW-0597">Phosphoprotein</keyword>
<keyword id="KW-1267">Proteomics identification</keyword>
<keyword id="KW-1185">Reference proteome</keyword>
<keyword id="KW-0727">SH2 domain</keyword>
<keyword id="KW-0804">Transcription</keyword>
<keyword id="KW-0805">Transcription regulation</keyword>
<accession>P40763</accession>
<accession>A8K7B8</accession>
<accession>K7ENL3</accession>
<accession>O14916</accession>
<accession>Q9BW54</accession>
<protein>
    <recommendedName>
        <fullName evidence="63">Signal transducer and activator of transcription 3</fullName>
    </recommendedName>
    <alternativeName>
        <fullName evidence="60">Acute-phase response factor</fullName>
    </alternativeName>
</protein>